<keyword id="KW-0007">Acetylation</keyword>
<keyword id="KW-1072">Activation of host autophagy by virus</keyword>
<keyword id="KW-0053">Apoptosis</keyword>
<keyword id="KW-0067">ATP-binding</keyword>
<keyword id="KW-0167">Capsid protein</keyword>
<keyword id="KW-1165">Clathrin-mediated endocytosis of virus by host</keyword>
<keyword id="KW-1015">Disulfide bond</keyword>
<keyword id="KW-1170">Fusion of virus membrane with host endosomal membrane</keyword>
<keyword id="KW-1168">Fusion of virus membrane with host membrane</keyword>
<keyword id="KW-1078">G1/S host cell cycle checkpoint dysregulation by virus</keyword>
<keyword id="KW-0325">Glycoprotein</keyword>
<keyword id="KW-0347">Helicase</keyword>
<keyword id="KW-1032">Host cell membrane</keyword>
<keyword id="KW-1035">Host cytoplasm</keyword>
<keyword id="KW-1038">Host endoplasmic reticulum</keyword>
<keyword id="KW-1041">Host lipid droplet</keyword>
<keyword id="KW-1043">Host membrane</keyword>
<keyword id="KW-1045">Host mitochondrion</keyword>
<keyword id="KW-1048">Host nucleus</keyword>
<keyword id="KW-0945">Host-virus interaction</keyword>
<keyword id="KW-0378">Hydrolase</keyword>
<keyword id="KW-1090">Inhibition of host innate immune response by virus</keyword>
<keyword id="KW-1114">Inhibition of host interferon signaling pathway by virus</keyword>
<keyword id="KW-1097">Inhibition of host MAVS by virus</keyword>
<keyword id="KW-1113">Inhibition of host RLR pathway by virus</keyword>
<keyword id="KW-1105">Inhibition of host STAT1 by virus</keyword>
<keyword id="KW-1110">Inhibition of host TRAFs by virus</keyword>
<keyword id="KW-0922">Interferon antiviral system evasion</keyword>
<keyword id="KW-0407">Ion channel</keyword>
<keyword id="KW-0406">Ion transport</keyword>
<keyword id="KW-1017">Isopeptide bond</keyword>
<keyword id="KW-0449">Lipoprotein</keyword>
<keyword id="KW-0460">Magnesium</keyword>
<keyword id="KW-0472">Membrane</keyword>
<keyword id="KW-0479">Metal-binding</keyword>
<keyword id="KW-1121">Modulation of host cell cycle by virus</keyword>
<keyword id="KW-0511">Multifunctional enzyme</keyword>
<keyword id="KW-0547">Nucleotide-binding</keyword>
<keyword id="KW-0548">Nucleotidyltransferase</keyword>
<keyword id="KW-0553">Oncogene</keyword>
<keyword id="KW-0564">Palmitate</keyword>
<keyword id="KW-0597">Phosphoprotein</keyword>
<keyword id="KW-0645">Protease</keyword>
<keyword id="KW-0687">Ribonucleoprotein</keyword>
<keyword id="KW-0694">RNA-binding</keyword>
<keyword id="KW-0696">RNA-directed RNA polymerase</keyword>
<keyword id="KW-0720">Serine protease</keyword>
<keyword id="KW-0729">SH3-binding</keyword>
<keyword id="KW-0788">Thiol protease</keyword>
<keyword id="KW-0804">Transcription</keyword>
<keyword id="KW-0805">Transcription regulation</keyword>
<keyword id="KW-0808">Transferase</keyword>
<keyword id="KW-0812">Transmembrane</keyword>
<keyword id="KW-1133">Transmembrane helix</keyword>
<keyword id="KW-0813">Transport</keyword>
<keyword id="KW-0832">Ubl conjugation</keyword>
<keyword id="KW-1161">Viral attachment to host cell</keyword>
<keyword id="KW-0261">Viral envelope protein</keyword>
<keyword id="KW-0899">Viral immunoevasion</keyword>
<keyword id="KW-1182">Viral ion channel</keyword>
<keyword id="KW-0543">Viral nucleoprotein</keyword>
<keyword id="KW-1162">Viral penetration into host cytoplasm</keyword>
<keyword id="KW-0693">Viral RNA replication</keyword>
<keyword id="KW-0946">Virion</keyword>
<keyword id="KW-1164">Virus endocytosis by host</keyword>
<keyword id="KW-1160">Virus entry into host cell</keyword>
<keyword id="KW-0862">Zinc</keyword>
<feature type="initiator methionine" description="Removed; by host" evidence="4">
    <location>
        <position position="1"/>
    </location>
</feature>
<feature type="chain" id="PRO_0000450930" description="Genome polyprotein">
    <location>
        <begin position="2"/>
        <end position="3013"/>
    </location>
</feature>
<feature type="chain" id="PRO_0000045712" description="Core protein precursor" evidence="13">
    <location>
        <begin position="2"/>
        <end position="191"/>
    </location>
</feature>
<feature type="chain" id="PRO_0000045713" description="Mature core protein">
    <location>
        <begin position="2"/>
        <end position="177"/>
    </location>
</feature>
<feature type="propeptide" id="PRO_0000045714" description="ER anchor for the core protein, removed in mature form by host signal peptidase">
    <location>
        <begin position="178"/>
        <end position="191"/>
    </location>
</feature>
<feature type="chain" id="PRO_0000045715" description="Envelope glycoprotein E1">
    <location>
        <begin position="192"/>
        <end position="383"/>
    </location>
</feature>
<feature type="chain" id="PRO_0000045716" description="Envelope glycoprotein E2">
    <location>
        <begin position="384"/>
        <end position="744"/>
    </location>
</feature>
<feature type="chain" id="PRO_0000045717" description="Viroporin p7">
    <location>
        <begin position="745"/>
        <end position="807"/>
    </location>
</feature>
<feature type="chain" id="PRO_0000045718" description="Protease NS2" evidence="17">
    <location>
        <begin position="808"/>
        <end position="1024"/>
    </location>
</feature>
<feature type="chain" id="PRO_0000045719" description="Serine protease/helicase NS3">
    <location>
        <begin position="1025"/>
        <end position="1655"/>
    </location>
</feature>
<feature type="chain" id="PRO_0000045720" description="Non-structural protein 4A">
    <location>
        <begin position="1656"/>
        <end position="1709"/>
    </location>
</feature>
<feature type="chain" id="PRO_0000045721" description="Non-structural protein 4B">
    <location>
        <begin position="1710"/>
        <end position="1970"/>
    </location>
</feature>
<feature type="chain" id="PRO_0000045722" description="Non-structural protein 5A">
    <location>
        <begin position="1971"/>
        <end position="2422"/>
    </location>
</feature>
<feature type="chain" id="PRO_0000045723" description="RNA-directed RNA polymerase">
    <location>
        <begin position="2423"/>
        <end position="3013"/>
    </location>
</feature>
<feature type="topological domain" description="Cytoplasmic" evidence="13">
    <location>
        <begin position="2"/>
        <end position="168"/>
    </location>
</feature>
<feature type="transmembrane region" description="Helical" evidence="13">
    <location>
        <begin position="169"/>
        <end position="189"/>
    </location>
</feature>
<feature type="topological domain" description="Lumenal" evidence="5">
    <location>
        <begin position="190"/>
        <end position="358"/>
    </location>
</feature>
<feature type="transmembrane region" description="Helical" evidence="5">
    <location>
        <begin position="359"/>
        <end position="379"/>
    </location>
</feature>
<feature type="topological domain" description="Lumenal" evidence="5">
    <location>
        <begin position="380"/>
        <end position="723"/>
    </location>
</feature>
<feature type="transmembrane region" description="Helical" evidence="5">
    <location>
        <begin position="724"/>
        <end position="744"/>
    </location>
</feature>
<feature type="topological domain" description="Lumenal" evidence="5">
    <location>
        <begin position="745"/>
        <end position="755"/>
    </location>
</feature>
<feature type="transmembrane region" description="Helical" evidence="5">
    <location>
        <begin position="756"/>
        <end position="776"/>
    </location>
</feature>
<feature type="topological domain" description="Cytoplasmic" evidence="5">
    <location>
        <begin position="777"/>
        <end position="780"/>
    </location>
</feature>
<feature type="transmembrane region" description="Helical" evidence="5">
    <location>
        <begin position="781"/>
        <end position="801"/>
    </location>
</feature>
<feature type="topological domain" description="Lumenal" evidence="5">
    <location>
        <begin position="802"/>
        <end position="811"/>
    </location>
</feature>
<feature type="transmembrane region" description="Helical" evidence="12">
    <location>
        <begin position="812"/>
        <end position="832"/>
    </location>
</feature>
<feature type="topological domain" description="Cytoplasmic" evidence="12">
    <location>
        <begin position="833"/>
        <end position="879"/>
    </location>
</feature>
<feature type="transmembrane region" description="Helical" evidence="12">
    <location>
        <begin position="880"/>
        <end position="900"/>
    </location>
</feature>
<feature type="topological domain" description="Lumenal" evidence="12">
    <location>
        <begin position="901"/>
        <end position="926"/>
    </location>
</feature>
<feature type="transmembrane region" description="Helical" evidence="12">
    <location>
        <begin position="927"/>
        <end position="947"/>
    </location>
</feature>
<feature type="topological domain" description="Cytoplasmic" evidence="12">
    <location>
        <begin position="948"/>
        <end position="1655"/>
    </location>
</feature>
<feature type="transmembrane region" description="Helical" evidence="13">
    <location>
        <begin position="1656"/>
        <end position="1676"/>
    </location>
</feature>
<feature type="topological domain" description="Cytoplasmic" evidence="13">
    <location>
        <begin position="1677"/>
        <end position="1803"/>
    </location>
</feature>
<feature type="transmembrane region" description="Helical" evidence="13">
    <location>
        <begin position="1804"/>
        <end position="1824"/>
    </location>
</feature>
<feature type="topological domain" description="Lumenal" evidence="5">
    <location>
        <begin position="1825"/>
        <end position="1826"/>
    </location>
</feature>
<feature type="transmembrane region" description="Helical" evidence="13">
    <location>
        <begin position="1827"/>
        <end position="1847"/>
    </location>
</feature>
<feature type="topological domain" description="Cytoplasmic" evidence="13">
    <location>
        <position position="1848"/>
    </location>
</feature>
<feature type="transmembrane region" description="Helical" evidence="13">
    <location>
        <begin position="1849"/>
        <end position="1869"/>
    </location>
</feature>
<feature type="topological domain" description="Lumenal" evidence="13">
    <location>
        <begin position="1870"/>
        <end position="1879"/>
    </location>
</feature>
<feature type="transmembrane region" description="Helical" evidence="13">
    <location>
        <begin position="1880"/>
        <end position="1900"/>
    </location>
</feature>
<feature type="topological domain" description="Cytoplasmic" evidence="13">
    <location>
        <begin position="1901"/>
        <end position="1970"/>
    </location>
</feature>
<feature type="intramembrane region" evidence="5">
    <location>
        <begin position="1971"/>
        <end position="2000"/>
    </location>
</feature>
<feature type="topological domain" description="Cytoplasmic" evidence="5">
    <location>
        <begin position="2001"/>
        <end position="2992"/>
    </location>
</feature>
<feature type="transmembrane region" description="Helical" evidence="5">
    <location>
        <begin position="2993"/>
        <end position="3013"/>
    </location>
</feature>
<feature type="domain" description="Peptidase C18" evidence="17">
    <location>
        <begin position="901"/>
        <end position="1024"/>
    </location>
</feature>
<feature type="domain" description="Peptidase S29" evidence="18">
    <location>
        <begin position="1025"/>
        <end position="1206"/>
    </location>
</feature>
<feature type="domain" description="Helicase ATP-binding" evidence="15">
    <location>
        <begin position="1215"/>
        <end position="1367"/>
    </location>
</feature>
<feature type="domain" description="Helicase C-terminal" evidence="16">
    <location>
        <begin position="1374"/>
        <end position="1536"/>
    </location>
</feature>
<feature type="domain" description="RdRp catalytic" evidence="14">
    <location>
        <begin position="2636"/>
        <end position="2754"/>
    </location>
</feature>
<feature type="region of interest" description="Disordered" evidence="5">
    <location>
        <begin position="2"/>
        <end position="75"/>
    </location>
</feature>
<feature type="region of interest" description="Interaction with DDX3X" evidence="9">
    <location>
        <begin position="2"/>
        <end position="59"/>
    </location>
</feature>
<feature type="region of interest" description="Interaction with EIF2AK2/PKR" evidence="2">
    <location>
        <begin position="2"/>
        <end position="58"/>
    </location>
</feature>
<feature type="region of interest" description="Interaction with STAT1" evidence="2">
    <location>
        <begin position="2"/>
        <end position="23"/>
    </location>
</feature>
<feature type="region of interest" description="Important for endoplasmic reticulum and mitochondrial localization" evidence="2">
    <location>
        <begin position="112"/>
        <end position="152"/>
    </location>
</feature>
<feature type="region of interest" description="Interaction with APOA2" evidence="6">
    <location>
        <begin position="122"/>
        <end position="173"/>
    </location>
</feature>
<feature type="region of interest" description="Important for lipid droplets localization" evidence="5">
    <location>
        <begin position="164"/>
        <end position="167"/>
    </location>
</feature>
<feature type="region of interest" description="Important for fusion" evidence="5">
    <location>
        <begin position="265"/>
        <end position="296"/>
    </location>
</feature>
<feature type="region of interest" description="HVR1" evidence="5">
    <location>
        <begin position="385"/>
        <end position="412"/>
    </location>
</feature>
<feature type="region of interest" description="HVR2" evidence="5">
    <location>
        <begin position="475"/>
        <end position="479"/>
    </location>
</feature>
<feature type="region of interest" description="CD81-binding 1" evidence="3">
    <location>
        <begin position="481"/>
        <end position="494"/>
    </location>
</feature>
<feature type="region of interest" description="CD81-binding 2" evidence="3">
    <location>
        <begin position="545"/>
        <end position="552"/>
    </location>
</feature>
<feature type="region of interest" description="PKR/eIF2-alpha phosphorylation homology domain (PePHD)">
    <location>
        <begin position="658"/>
        <end position="669"/>
    </location>
</feature>
<feature type="region of interest" description="Protease NS2-3" evidence="3">
    <location>
        <begin position="902"/>
        <end position="1204"/>
    </location>
</feature>
<feature type="region of interest" description="Interaction with host SCPS1" evidence="11">
    <location>
        <begin position="927"/>
        <end position="947"/>
    </location>
</feature>
<feature type="region of interest" description="RNA-binding" evidence="3">
    <location>
        <begin position="1484"/>
        <end position="1496"/>
    </location>
</feature>
<feature type="region of interest" description="NS3-binding" evidence="5">
    <location>
        <begin position="1677"/>
        <end position="1688"/>
    </location>
</feature>
<feature type="region of interest" description="Transcriptional activation" evidence="13">
    <location>
        <begin position="2118"/>
        <end position="2331"/>
    </location>
</feature>
<feature type="region of interest" description="FKBP8-binding" evidence="2">
    <location>
        <begin position="2118"/>
        <end position="2206"/>
    </location>
</feature>
<feature type="region of interest" description="Interaction with non-structural protein 4A" evidence="2">
    <location>
        <begin position="2133"/>
        <end position="2137"/>
    </location>
</feature>
<feature type="region of interest" description="Interaction with host SKP2" evidence="5">
    <location>
        <begin position="2187"/>
        <end position="2440"/>
    </location>
</feature>
<feature type="region of interest" description="Interaction with EIF2AK2/PKR" evidence="3">
    <location>
        <begin position="2208"/>
        <end position="2273"/>
    </location>
</feature>
<feature type="region of interest" description="ISDR" evidence="2">
    <location>
        <begin position="2208"/>
        <end position="2247"/>
    </location>
</feature>
<feature type="region of interest" description="NS4B-binding" evidence="13">
    <location>
        <begin position="2247"/>
        <end position="2305"/>
    </location>
</feature>
<feature type="region of interest" description="V3">
    <location>
        <begin position="2298"/>
        <end position="2376"/>
    </location>
</feature>
<feature type="region of interest" description="Disordered" evidence="19">
    <location>
        <begin position="2316"/>
        <end position="2411"/>
    </location>
</feature>
<feature type="short sequence motif" description="Nuclear localization signal" evidence="11">
    <location>
        <begin position="5"/>
        <end position="13"/>
    </location>
</feature>
<feature type="short sequence motif" description="Nuclear localization signal" evidence="11">
    <location>
        <begin position="38"/>
        <end position="43"/>
    </location>
</feature>
<feature type="short sequence motif" description="Nuclear localization signal" evidence="11">
    <location>
        <begin position="58"/>
        <end position="64"/>
    </location>
</feature>
<feature type="short sequence motif" description="Nuclear localization signal" evidence="11">
    <location>
        <begin position="66"/>
        <end position="71"/>
    </location>
</feature>
<feature type="short sequence motif" description="DECH box" evidence="11">
    <location>
        <begin position="1314"/>
        <end position="1317"/>
    </location>
</feature>
<feature type="short sequence motif" description="SH3-binding" evidence="13">
    <location>
        <begin position="2321"/>
        <end position="2324"/>
    </location>
</feature>
<feature type="short sequence motif" description="Nuclear localization signal" evidence="2">
    <location>
        <begin position="2326"/>
        <end position="2334"/>
    </location>
</feature>
<feature type="compositionally biased region" description="Basic residues" evidence="19">
    <location>
        <begin position="7"/>
        <end position="16"/>
    </location>
</feature>
<feature type="compositionally biased region" description="Low complexity" evidence="19">
    <location>
        <begin position="32"/>
        <end position="47"/>
    </location>
</feature>
<feature type="compositionally biased region" description="Basic residues" evidence="19">
    <location>
        <begin position="58"/>
        <end position="72"/>
    </location>
</feature>
<feature type="compositionally biased region" description="Polar residues" evidence="19">
    <location>
        <begin position="2347"/>
        <end position="2373"/>
    </location>
</feature>
<feature type="compositionally biased region" description="Basic and acidic residues" evidence="19">
    <location>
        <begin position="2375"/>
        <end position="2385"/>
    </location>
</feature>
<feature type="active site" description="For protease NS2 activity; shared with dimeric partner" evidence="17">
    <location>
        <position position="950"/>
    </location>
</feature>
<feature type="active site" description="For protease NS2 activity; shared with dimeric partner" evidence="17">
    <location>
        <position position="970"/>
    </location>
</feature>
<feature type="active site" description="For protease NS2 activity; shared with dimeric partner" evidence="17">
    <location>
        <position position="991"/>
    </location>
</feature>
<feature type="active site" description="Charge relay system; for serine protease NS3 activity" evidence="18">
    <location>
        <position position="1081"/>
    </location>
</feature>
<feature type="active site" description="Charge relay system; for serine protease NS3 activity" evidence="18">
    <location>
        <position position="1105"/>
    </location>
</feature>
<feature type="active site" description="Charge relay system; for serine protease NS3 activity" evidence="18">
    <location>
        <position position="1163"/>
    </location>
</feature>
<feature type="binding site" evidence="18">
    <location>
        <position position="1121"/>
    </location>
    <ligand>
        <name>Zn(2+)</name>
        <dbReference type="ChEBI" id="CHEBI:29105"/>
        <label>1</label>
        <note>structural; for NS3 protease activity and NS2/3 auto-cleavage activity</note>
    </ligand>
</feature>
<feature type="binding site" evidence="18">
    <location>
        <position position="1123"/>
    </location>
    <ligand>
        <name>Zn(2+)</name>
        <dbReference type="ChEBI" id="CHEBI:29105"/>
        <label>1</label>
        <note>structural; for NS3 protease activity and NS2/3 auto-cleavage activity</note>
    </ligand>
</feature>
<feature type="binding site" evidence="18">
    <location>
        <position position="1169"/>
    </location>
    <ligand>
        <name>Zn(2+)</name>
        <dbReference type="ChEBI" id="CHEBI:29105"/>
        <label>1</label>
        <note>structural; for NS3 protease activity and NS2/3 auto-cleavage activity</note>
    </ligand>
</feature>
<feature type="binding site" evidence="18">
    <location>
        <position position="1173"/>
    </location>
    <ligand>
        <name>Zn(2+)</name>
        <dbReference type="ChEBI" id="CHEBI:29105"/>
        <label>1</label>
        <note>structural; for NS3 protease activity and NS2/3 auto-cleavage activity</note>
    </ligand>
</feature>
<feature type="binding site" evidence="15">
    <location>
        <begin position="1228"/>
        <end position="1235"/>
    </location>
    <ligand>
        <name>ATP</name>
        <dbReference type="ChEBI" id="CHEBI:30616"/>
    </ligand>
</feature>
<feature type="binding site" evidence="12">
    <location>
        <position position="1235"/>
    </location>
    <ligand>
        <name>Mg(2+)</name>
        <dbReference type="ChEBI" id="CHEBI:18420"/>
        <label>1</label>
        <note>catalytic; for NS3 helicase activity</note>
    </ligand>
</feature>
<feature type="binding site" evidence="12">
    <location>
        <position position="1315"/>
    </location>
    <ligand>
        <name>Mg(2+)</name>
        <dbReference type="ChEBI" id="CHEBI:18420"/>
        <label>1</label>
        <note>catalytic; for NS3 helicase activity</note>
    </ligand>
</feature>
<feature type="binding site" evidence="12">
    <location>
        <position position="2009"/>
    </location>
    <ligand>
        <name>Zn(2+)</name>
        <dbReference type="ChEBI" id="CHEBI:29105"/>
        <label>2</label>
        <note>structural</note>
    </ligand>
</feature>
<feature type="binding site" evidence="12">
    <location>
        <position position="2027"/>
    </location>
    <ligand>
        <name>Zn(2+)</name>
        <dbReference type="ChEBI" id="CHEBI:29105"/>
        <label>2</label>
        <note>structural</note>
    </ligand>
</feature>
<feature type="binding site" evidence="12">
    <location>
        <position position="2029"/>
    </location>
    <ligand>
        <name>Zn(2+)</name>
        <dbReference type="ChEBI" id="CHEBI:29105"/>
        <label>2</label>
        <note>structural</note>
    </ligand>
</feature>
<feature type="binding site" evidence="12">
    <location>
        <position position="2050"/>
    </location>
    <ligand>
        <name>Zn(2+)</name>
        <dbReference type="ChEBI" id="CHEBI:29105"/>
        <label>2</label>
        <note>structural</note>
    </ligand>
</feature>
<feature type="binding site" evidence="3">
    <location>
        <position position="2642"/>
    </location>
    <ligand>
        <name>Mg(2+)</name>
        <dbReference type="ChEBI" id="CHEBI:18420"/>
        <label>2</label>
        <note>catalytic; for RNA-directed RNA polymerase activity</note>
    </ligand>
</feature>
<feature type="binding site" evidence="3">
    <location>
        <position position="2740"/>
    </location>
    <ligand>
        <name>Mg(2+)</name>
        <dbReference type="ChEBI" id="CHEBI:18420"/>
        <label>2</label>
        <note>catalytic; for RNA-directed RNA polymerase activity</note>
    </ligand>
</feature>
<feature type="binding site" evidence="3">
    <location>
        <position position="2741"/>
    </location>
    <ligand>
        <name>Mg(2+)</name>
        <dbReference type="ChEBI" id="CHEBI:18420"/>
        <label>2</label>
        <note>catalytic; for RNA-directed RNA polymerase activity</note>
    </ligand>
</feature>
<feature type="site" description="Cleavage; by host signal peptide peptidase" evidence="2">
    <location>
        <begin position="177"/>
        <end position="178"/>
    </location>
</feature>
<feature type="site" description="Cleavage; by host signal peptidase" evidence="2">
    <location>
        <begin position="191"/>
        <end position="192"/>
    </location>
</feature>
<feature type="site" description="Cleavage; by host signal peptidase" evidence="2">
    <location>
        <begin position="383"/>
        <end position="384"/>
    </location>
</feature>
<feature type="site" description="Cleavage; by host signal peptidase">
    <location>
        <begin position="744"/>
        <end position="745"/>
    </location>
</feature>
<feature type="site" description="Cleavage; by host signal peptidase">
    <location>
        <begin position="807"/>
        <end position="808"/>
    </location>
</feature>
<feature type="site" description="Cleavage; by protease NS2" evidence="17">
    <location>
        <begin position="1024"/>
        <end position="1025"/>
    </location>
</feature>
<feature type="site" description="Cleavage; by serine protease NS3" evidence="5">
    <location>
        <begin position="1655"/>
        <end position="1656"/>
    </location>
</feature>
<feature type="site" description="Cleavage; by serine protease NS3" evidence="5">
    <location>
        <begin position="1709"/>
        <end position="1710"/>
    </location>
</feature>
<feature type="site" description="Cleavage; by serine protease NS3" evidence="5">
    <location>
        <begin position="1970"/>
        <end position="1971"/>
    </location>
</feature>
<feature type="site" description="Cleavage; by serine protease NS3" evidence="5">
    <location>
        <begin position="2422"/>
        <end position="2423"/>
    </location>
</feature>
<feature type="modified residue" description="N-acetylserine; by host" evidence="10">
    <location>
        <position position="2"/>
    </location>
</feature>
<feature type="modified residue" description="Phosphoserine; by host" evidence="7">
    <location>
        <position position="53"/>
    </location>
</feature>
<feature type="modified residue" description="Phosphoserine; by host" evidence="7">
    <location>
        <position position="99"/>
    </location>
</feature>
<feature type="modified residue" description="Phosphoserine; by host" evidence="7">
    <location>
        <position position="116"/>
    </location>
</feature>
<feature type="modified residue" description="Phosphoserine; by host" evidence="12">
    <location>
        <position position="2192"/>
    </location>
</feature>
<feature type="modified residue" description="Phosphoserine; by host" evidence="12">
    <location>
        <position position="2195"/>
    </location>
</feature>
<feature type="modified residue" description="Phosphoserine; by host" evidence="12">
    <location>
        <position position="2199"/>
    </location>
</feature>
<feature type="modified residue" description="Phosphoserine; by host" evidence="12">
    <location>
        <position position="2202"/>
    </location>
</feature>
<feature type="modified residue" description="Phosphoserine; by host" evidence="11">
    <location>
        <position position="2205"/>
    </location>
</feature>
<feature type="modified residue" description="Phosphoserine; by host" evidence="11">
    <location>
        <position position="2208"/>
    </location>
</feature>
<feature type="modified residue" description="Phosphoserine; by host" evidence="2">
    <location>
        <position position="2464"/>
    </location>
</feature>
<feature type="lipid moiety-binding region" description="S-palmitoyl cysteine; by host" evidence="5">
    <location>
        <position position="920"/>
    </location>
</feature>
<feature type="lipid moiety-binding region" description="S-palmitoyl cysteine; by host" evidence="5">
    <location>
        <position position="1970"/>
    </location>
</feature>
<feature type="glycosylation site" description="N-linked (GlcNAc...) asparagine; by host" evidence="5">
    <location>
        <position position="196"/>
    </location>
</feature>
<feature type="glycosylation site" description="N-linked (GlcNAc...) asparagine; by host" evidence="5">
    <location>
        <position position="209"/>
    </location>
</feature>
<feature type="glycosylation site" description="N-linked (GlcNAc...) asparagine; by host" evidence="5">
    <location>
        <position position="234"/>
    </location>
</feature>
<feature type="glycosylation site" description="N-linked (GlcNAc...) asparagine; by host" evidence="13">
    <location>
        <position position="250"/>
    </location>
</feature>
<feature type="glycosylation site" description="N-linked (GlcNAc...) asparagine; by host" evidence="5">
    <location>
        <position position="305"/>
    </location>
</feature>
<feature type="glycosylation site" description="N-linked (GlcNAc...) (high mannose) asparagine; by host" evidence="5">
    <location>
        <position position="417"/>
    </location>
</feature>
<feature type="glycosylation site" description="N-linked (GlcNAc...) (high mannose) asparagine; by host" evidence="5">
    <location>
        <position position="423"/>
    </location>
</feature>
<feature type="glycosylation site" description="N-linked (GlcNAc...) (high mannose) asparagine; by host" evidence="5">
    <location>
        <position position="430"/>
    </location>
</feature>
<feature type="glycosylation site" description="N-linked (GlcNAc...) asparagine; by host" evidence="13">
    <location>
        <position position="448"/>
    </location>
</feature>
<feature type="glycosylation site" description="N-linked (GlcNAc...) asparagine; by host" evidence="13">
    <location>
        <position position="476"/>
    </location>
</feature>
<feature type="glycosylation site" description="N-linked (GlcNAc...) asparagine; by host" evidence="13">
    <location>
        <position position="533"/>
    </location>
</feature>
<feature type="glycosylation site" description="N-linked (GlcNAc...) asparagine; by host" evidence="13">
    <location>
        <position position="557"/>
    </location>
</feature>
<feature type="glycosylation site" description="N-linked (GlcNAc...) (high mannose) asparagine; by host" evidence="5">
    <location>
        <position position="621"/>
    </location>
</feature>
<feature type="glycosylation site" description="N-linked (GlcNAc...) (high mannose) asparagine; by host" evidence="5">
    <location>
        <position position="643"/>
    </location>
</feature>
<feature type="disulfide bond" evidence="5">
    <location>
        <begin position="429"/>
        <end position="553"/>
    </location>
</feature>
<feature type="disulfide bond" evidence="5">
    <location>
        <begin position="452"/>
        <end position="459"/>
    </location>
</feature>
<feature type="disulfide bond" evidence="5">
    <location>
        <begin position="487"/>
        <end position="495"/>
    </location>
</feature>
<feature type="disulfide bond" evidence="5">
    <location>
        <begin position="504"/>
        <end position="509"/>
    </location>
</feature>
<feature type="disulfide bond" evidence="5">
    <location>
        <begin position="565"/>
        <end position="570"/>
    </location>
</feature>
<feature type="disulfide bond" evidence="5">
    <location>
        <begin position="579"/>
        <end position="583"/>
    </location>
</feature>
<feature type="disulfide bond" evidence="5">
    <location>
        <begin position="595"/>
        <end position="618"/>
    </location>
</feature>
<feature type="disulfide bond" evidence="5">
    <location>
        <begin position="605"/>
        <end position="642"/>
    </location>
</feature>
<feature type="disulfide bond" evidence="5">
    <location>
        <begin position="650"/>
        <end position="675"/>
    </location>
</feature>
<sequence>MSTLPKPQKRNQRNTNRRPQDVKFPGGGQIVGGVYLLPRRGPRLGVRATRKTSERSQPRGRRQPIPKARRQTGRTWAQPGYPWPLYGNEGCGWMGWLLSPRGSRPHWGPNDPRRRSRNLGKVIDTLTCGFADLMGYIPVVGAPLGGVAAALAHGVRAVEDGINYATGNLPGCSFSIFLLALLSCLTTPASAVHYANKSGIYHLTNDCPNSSIVYEAEDFIMHLPGCVPCIKSGNGSSCWLPATLTIAVPNASIPVRGFRRHVDLMVGAAAFCSAMYVGDLCGGIFLVGQLFSFNPRRHWVVQDCNCSIYVGHITGHRMAWDMMMNWSPTATLVLSYVMRIPQVIMDIFTGGHWGILAGILYYSMVANWAKVLCILFLFAGVDATTRTTGAQAARATLGFTGLFQTGAKQNIHLINTNGSWHINRTALNCNDSLNTGFMAALFYLHKFNSTGCPERLSACKSITQFAQGWGPVTYANVSGSSEDRPYCWHYAPRPCGVVSARSVCGPVYCFTPSPVVVGTTDRRGVPTYTWGENESDVFLLESLRPPAGAWYGCTWMNSTGYTKTCGAPPCHIGPPDQFCPTDCFRKHPEATYRKCGSGPWLTPRCLVDYPYRLWHYPCTVNYTIHKVRLFINGLEHRFDAACNWTRGERCELEDRDRIEMSPLLFSTTELAILPCSFTTMPALSTGLVHLHQNIVDIQYLYGLAPALVSWAVRWEYVVLAFLLLADARICACLWMVLLISQVEAALENLIVLNAASAASSQGWIYCLVFICCAWYIKGRVVPGATYAILHLWPLLLLVLALPQRAYAQDREQGASIGVVVIAAITIFTLTPAYKTMLVHFLWWNQYFIARSEALIQQWVPSLRVRGGRDAVILLTCLLHPSLGFDITKMLLALLGPLYLLQVSLLRVPYYVRAHALLRVCILVRRVAGGKYIQAALLKLGAWTGTYIYDHLAPLSTWASDGLRDLAVAVEPVTFSPMEKKIITWGADTAACGDILAGLPVSARLGHLLFLGPADDMKSMGWRLLAPITAYCQQTRGLLGTIVTSLTGRDRNVVEGEIQVLSTATQSFLGTAINGVMWTVYHGAGSKTLAGPKGPVCQMYTNVDQDMVGWPAPPGTRSLTPCTCGASDLYLVTRNADVIPARRRGDTRAGLLSPRPLSTLKGSSGGPLMCPSDHVVGLFRAAVCTRGVAKALDFVPVENMETTMRSPVFTDNSTPPAVPQTYQVGYLHAPTGSGKSTKVPAAYASQGYKVLVLNPSVAATLGFGSYMSTAHGIDPNIRTGVRTITTGGPITYSTYGKFLADGGCSGGAYDIIICDECHSTDPTTVLGIGTVLDQAETAGVRLTVLATATPPGSVTVPHPNITETALPSTGEVPFYGKAIPLECIKGGRHLIFCHSKKKCDELAKQLRTLGLNAVAFYRGVDVSVIPTAGDVVVCATDALMTGYTGDFDSVIDCNVAVTQIVDFSLDPTFSIETTTVPQDAVARSQRRGRTGRGKPGVYRYVSQGERPSGMFDTVVLCEAYDVGCAWYELTPSETTVRLRAYLNTPGLPVCQDHLEFWEGVFTGMTHIDAHFLSQTKQGGENFAYLVAYQATVCARAKAPPPSWDTMWKCLIRLKPMLTGPTPLLYRLGAVQNEIITTHPITKYIMTCMAADLEVITSTWVLAGGIVAALAAYCLTVGSVVICGRIVTSGKPVPLPDREVLYRQFDEMEECSRHIPYLAEGQQIAEQFKQKILGLLQNTAKQAEDLKPAVQSAWPKLEQFWQKHLWNFVSGVQYLAGLSTLPGNPAVASLMSFSAALTSPLSTSTTLLLNILGGWVASQLAPPTASTAFVVSGLAGAAVGSIGLGKVIIDILAGYGAGVSGALVAFKIMSGEAPAVEDMVNLLPALLSPGALVVGVVCAAVLRRHVGPSEGATQWMNRLIAFASRGNHVSPTHYVPETDASRAVTTILSSLTITSLLRRLHEWISGDWSAPCSCSWLKDVWDWVCTVLSDFKTWLRAKLVPTLPGIPFISCQRGFRGVWRGDGVNYTTCSCGANITGHVKNGSMKIVGPKMCSNVWNNRFPINAITTGPSVPVPEPNYHKALWRVSAEDYVEVVRVNDHHYIVGATADNLKCPCQVPAPEFFTEVDGVRLHRFAPPCRPLMRDDITFSVGLSTYVVGSQLPCEPEPDVVILTSMLTDPDHITAETAARRLARGSPPSLASSSASQLSAPSLKATCTTAGKHPDAELIEANLLWRQEVGGNITRVESENKIIVLDSFDPLIAETDDREISVGAECFNPPRPKFPPALPVWARPDYNPPLLQPWKAPDYEPPLVHGCALPPKGLPPVPPPRKKRVVQLDEGSAKRALAELAQTSFPPSTATLSEDSGRETSTLSSDMTPPREEADRASDDGSYSSMPPLEGEPGDPDLSSGSWSTVSEDHDSVVCCSMSYSWTGALITPCAAEEEKLPISPLSNALIRHHNLVYSTTSRSASLRQKKVTFDRVQVVDQHYYDVLKEIKTKASGVSAKLLSVEEACALTPPHSARSKFGYGAKEVRGLASKAVNHINSVWEDLLEDNSTPIPTTIMAKNEVFCVDAQKGGRKPARLIVYPDLGVRVCEKRALYDVTQKLPIAVMGAAYGFQYSPKQRVDYLLKMWRSKKTPMGFSYDTRCFDSTVTERDIRTEEDIYQCCQLDPVAKKAITSLTERLYCGGPMYNSRGQSCGYRRCRASGVLTTSLGNTLTCYLKAQAACRAAKLKDFDMLVCGDDLVVISESMGVAEDASALRAFTEAMTRYSAPPGDDPQPEYDLELITSCSSNVSVAHDGAGQRYYYLTRDPLTPLSRAAWETARHTPVNSWLGNIIMYAPTIWVRMVLMTHFFAILQSQEILHKALDFDMYGVTYSVTPLDLPYIIQRLHGMAAFSLHGYSPGELNRVASCLRKLGAPPLRAWRHRARAVRAKLIAQGGKHAICGKYLFNWAVRTKLKLTPLRGAANLDLSGWFVSGGSGGDIFHSVSRARPRNLLLCLLLLTVGVGIFLLPAR</sequence>
<reference key="1">
    <citation type="journal article" date="1998" name="J. Gen. Virol.">
        <title>The entire nucleotide sequences of three hepatitis C virus isolates in genetic groups 7-9 and comparison with those in the other eight genetic groups.</title>
        <authorList>
            <person name="Tokita H."/>
            <person name="Okamoto H."/>
            <person name="Iizuka H."/>
            <person name="Kishimoto J."/>
            <person name="Tsuda F."/>
            <person name="Miyakawa Y."/>
            <person name="Mayumi M."/>
        </authorList>
    </citation>
    <scope>NUCLEOTIDE SEQUENCE [GENOMIC RNA]</scope>
</reference>
<reference key="2">
    <citation type="journal article" date="2000" name="J. Viral Hepat.">
        <title>Properties of the hepatitis C virus core protein: a structural protein that modulates cellular processes.</title>
        <authorList>
            <person name="McLauchlan J."/>
        </authorList>
    </citation>
    <scope>REVIEW</scope>
</reference>
<reference key="3">
    <citation type="journal article" date="2004" name="Hepatology">
        <title>Structural biology of hepatitis C virus.</title>
        <authorList>
            <person name="Penin F."/>
            <person name="Dubuisson J."/>
            <person name="Rey F.A."/>
            <person name="Moradpour D."/>
            <person name="Pawlotsky J.-M."/>
        </authorList>
    </citation>
    <scope>REVIEW</scope>
</reference>
<accession>O92530</accession>
<name>POLG_HCVVN</name>
<protein>
    <recommendedName>
        <fullName>Genome polyprotein</fullName>
    </recommendedName>
    <component>
        <recommendedName>
            <fullName>Core protein precursor</fullName>
        </recommendedName>
        <alternativeName>
            <fullName>Capsid protein C</fullName>
        </alternativeName>
        <alternativeName>
            <fullName>p23</fullName>
        </alternativeName>
    </component>
    <component>
        <recommendedName>
            <fullName>Mature core protein</fullName>
        </recommendedName>
        <alternativeName>
            <fullName>p21</fullName>
        </alternativeName>
    </component>
    <component>
        <recommendedName>
            <fullName>Envelope glycoprotein E1</fullName>
        </recommendedName>
        <alternativeName>
            <fullName>gp32</fullName>
        </alternativeName>
        <alternativeName>
            <fullName>gp35</fullName>
        </alternativeName>
    </component>
    <component>
        <recommendedName>
            <fullName>Envelope glycoprotein E2</fullName>
        </recommendedName>
        <alternativeName>
            <fullName>NS1</fullName>
        </alternativeName>
        <alternativeName>
            <fullName>gp68</fullName>
        </alternativeName>
        <alternativeName>
            <fullName>gp70</fullName>
        </alternativeName>
    </component>
    <component>
        <recommendedName>
            <fullName>Viroporin p7</fullName>
        </recommendedName>
    </component>
    <component>
        <recommendedName>
            <fullName>Protease NS2</fullName>
            <shortName>p23</shortName>
            <ecNumber evidence="3">3.4.22.-</ecNumber>
        </recommendedName>
        <alternativeName>
            <fullName>Non-structural protein 2</fullName>
            <shortName>NS2</shortName>
        </alternativeName>
    </component>
    <component>
        <recommendedName>
            <fullName>Serine protease/helicase NS3</fullName>
            <ecNumber evidence="5">3.4.21.98</ecNumber>
            <ecNumber evidence="5">3.6.1.15</ecNumber>
            <ecNumber evidence="5">3.6.4.13</ecNumber>
        </recommendedName>
        <alternativeName>
            <fullName>Hepacivirin</fullName>
        </alternativeName>
        <alternativeName>
            <fullName evidence="5">NS3 helicase</fullName>
        </alternativeName>
        <alternativeName>
            <fullName evidence="5">NS3 protease</fullName>
        </alternativeName>
        <alternativeName>
            <fullName>NS3P</fullName>
        </alternativeName>
        <alternativeName>
            <fullName>Viroporin p70</fullName>
        </alternativeName>
    </component>
    <component>
        <recommendedName>
            <fullName>Non-structural protein 4A</fullName>
            <shortName>NS4A</shortName>
        </recommendedName>
        <alternativeName>
            <fullName>p8</fullName>
        </alternativeName>
    </component>
    <component>
        <recommendedName>
            <fullName>Non-structural protein 4B</fullName>
            <shortName>NS4B</shortName>
        </recommendedName>
        <alternativeName>
            <fullName>p27</fullName>
        </alternativeName>
    </component>
    <component>
        <recommendedName>
            <fullName>Non-structural protein 5A</fullName>
            <shortName>NS5A</shortName>
        </recommendedName>
        <alternativeName>
            <fullName>p56/58</fullName>
        </alternativeName>
    </component>
    <component>
        <recommendedName>
            <fullName>RNA-directed RNA polymerase</fullName>
            <ecNumber evidence="5">2.7.7.48</ecNumber>
        </recommendedName>
        <alternativeName>
            <fullName>NS5B</fullName>
        </alternativeName>
        <alternativeName>
            <fullName>p68</fullName>
        </alternativeName>
    </component>
</protein>
<organism>
    <name type="scientific">Hepatitis C virus genotype 6d (isolate VN235)</name>
    <name type="common">HCV</name>
    <dbReference type="NCBI Taxonomy" id="356422"/>
    <lineage>
        <taxon>Viruses</taxon>
        <taxon>Riboviria</taxon>
        <taxon>Orthornavirae</taxon>
        <taxon>Kitrinoviricota</taxon>
        <taxon>Flasuviricetes</taxon>
        <taxon>Amarillovirales</taxon>
        <taxon>Flaviviridae</taxon>
        <taxon>Hepacivirus</taxon>
        <taxon>Hepacivirus hominis</taxon>
    </lineage>
</organism>
<proteinExistence type="inferred from homology"/>
<comment type="function">
    <molecule>Mature core protein</molecule>
    <text evidence="2 4 5 6 11 20">Packages viral RNA to form a viral nucleocapsid, and promotes virion budding (Probable). Participates in the viral particle production as a result of its interaction with the non-structural protein 5A (By similarity). Binds RNA and may function as a RNA chaperone to induce the RNA structural rearrangements taking place during virus replication (By similarity). Modulates viral translation initiation by interacting with viral IRES and 40S ribosomal subunit (By similarity). Affects various cell signaling pathways, host immunity and lipid metabolism (Probable). Prevents the establishment of cellular antiviral state by blocking the interferon-alpha/beta (IFN-alpha/beta) and IFN-gamma signaling pathways and by blocking the formation of phosphorylated STAT1 and promoting ubiquitin-mediated proteasome-dependent degradation of STAT1 (By similarity). Activates STAT3 leading to cellular transformation (By similarity). Regulates the activity of cellular genes, including c-myc and c-fos (By similarity). May repress the promoter of p53, and sequester CREB3 and SP110 isoform 3/Sp110b in the cytoplasm (By similarity). Represses cell cycle negative regulating factor CDKN1A, thereby interrupting an important check point of normal cell cycle regulation (By similarity). Targets transcription factors involved in the regulation of inflammatory responses and in the immune response: suppresses TNF-induced NF-kappa-B activation, and activates AP-1 (By similarity). Binds to dendritic cells (DCs) via C1QR1, resulting in down-regulation of T-lymphocytes proliferation (By similarity). Alters lipid metabolism by interacting with hepatocellular proteins involved in lipid accumulation and storage (By similarity). Induces up-regulation of FAS promoter activity, and thereby contributes to the increased triglyceride accumulation in hepatocytes (steatosis) (By similarity).</text>
</comment>
<comment type="function">
    <molecule>Envelope glycoprotein E1</molecule>
    <text evidence="5">Forms a heterodimer with envelope glycoprotein E2, which mediates virus attachment to the host cell, virion internalization through clathrin-dependent endocytosis and fusion with host membrane (By similarity). Fusion with the host cell is most likely mediated by both E1 and E2, through conformational rearrangements of the heterodimer required for fusion rather than a classical class II fusion mechanism (By similarity). E1/E2 heterodimer binds host apolipoproteins such as APOB and ApoE thereby forming a lipo-viro-particle (LVP) (By similarity). APOE associated to the LVP allows the initial virus attachment to cell surface receptors such as the heparan sulfate proteoglycans (HSPGs), syndecan-1 (SDC1), syndecan-1 (SDC2), the low-density lipoprotein receptor (LDLR) and scavenger receptor class B type I (SCARB1) (By similarity). The cholesterol transfer activity of SCARB1 allows E2 exposure and binding of E2 to SCARB1 and the tetraspanin CD81 (By similarity). E1/E2 heterodimer binding on CD81 activates the epithelial growth factor receptor (EGFR) signaling pathway (By similarity). Diffusion of the complex E1-E2-EGFR-SCARB1-CD81 to the cell lateral membrane allows further interaction with Claudin 1 (CLDN1) and occludin (OCLN) to finally trigger HCV entry (By similarity).</text>
</comment>
<comment type="function">
    <molecule>Envelope glycoprotein E2</molecule>
    <text evidence="4 5">Forms a heterodimer with envelope glycoprotein E1, which mediates virus attachment to the host cell, virion internalization through clathrin-dependent endocytosis and fusion with host membrane (By similarity). Fusion with the host cell is most likely mediated by both E1 and E2, through conformational rearrangements of the heterodimer required for fusion rather than a classical class II fusion mechanism (By similarity). The interaction between envelope glycoprotein E2 and host apolipoprotein E/APOE allows the proper assembly, maturation and infectivity of the viral particles (By similarity). This interaction is probably promoted via the up-regulation of cellular autophagy by the virus (By similarity). E1/E2 heterodimer binds host apolipoproteins such as APOB and APOE thereby forming a lipo-viro-particle (LVP) (By similarity). APOE associated to the LVP allows the initial virus attachment to cell surface receptors such as the heparan sulfate proteoglycans (HSPGs), syndecan-1 (SDC1), syndecan-1 (SDC2), the low-density lipoprotein receptor (LDLR) and scavenger receptor class B type I (SCARB1) (By similarity). The cholesterol transfer activity of SCARB1 allows E2 exposure and binding of E2 to SCARB1 and the tetraspanin CD81 (By similarity). E1/E2 heterodimer binding on CD81 activates the epithelial growth factor receptor (EGFR) signaling pathway (By similarity). Diffusion of the complex E1-E2-EGFR-SCARB1-CD81 to the cell lateral membrane allows further interaction with Claudin 1 (CLDN1) and occludin (OCLN) to finally trigger HCV entry (By similarity). Inhibits host EIF2AK2/PKR activation, preventing the establishment of an antiviral state (By similarity). Viral ligand for CD209/DC-SIGN and CLEC4M/DC-SIGNR, which are respectively found on dendritic cells (DCs), and on liver sinusoidal endothelial cells and macrophage-like cells of lymph node sinuses (By similarity). These interactions allow the capture of circulating HCV particles by these cells and subsequent facilitated transmission to permissive cells such as hepatocytes and lymphocyte subpopulations (By similarity). The interaction between E2 and host amino acid transporter complex formed by SLC3A2 and SLC7A5/LAT1 may facilitate viral entry into host cell (By similarity).</text>
</comment>
<comment type="function">
    <molecule>Viroporin p7</molecule>
    <text evidence="5 11 20">Ion channel protein that acts as a viroporin and plays an essential role in the assembly, envelopment and secretion of viral particles (By similarity). Regulates the host cell secretory pathway, which induces the intracellular retention of viral glycoproteins and favors assembly of viral particles (By similarity). Creates a pore in acidic organelles and releases Ca(2+) and H(+) in the cytoplasm of infected cells, leading to a productive viral infection (By similarity). High levels of cytoplasmic Ca(2+) may trigger membrane trafficking and transport of viral ER-associated proteins to viroplasms, sites of viral genome replication (Probable). This ionic imbalance induces the assembly of the inflammasome complex, which triggers the maturation of pro-IL-1beta into IL-1beta through the action of caspase-1 (By similarity). Targets also host mitochondria and induces mitochondrial depolarization (By similarity). In addition of its role as a viroporin, acts as a lipid raft adhesion factor (By similarity).</text>
</comment>
<comment type="function">
    <molecule>Protease NS2</molecule>
    <text evidence="3 5">Cysteine protease required for the proteolytic auto-cleavage between the non-structural proteins NS2 and NS3 (By similarity). The N-terminus of NS3 is required for the function of NS2 protease (active region NS2-3) (By similarity). Promotes the initiation of viral particle assembly by mediating the interaction between structural and non-structural proteins (By similarity).</text>
</comment>
<comment type="function">
    <molecule>Serine protease/helicase NS3</molecule>
    <text evidence="5 12">Displays three enzymatic activities: serine protease with a chymotrypsin-like fold, NTPase and RNA helicase (By similarity). NS3 serine protease, in association with NS4A, is responsible for the cleavages of NS3-NS4A, NS4A-NS4B, NS4B-NS5A and NS5A-NS5B (By similarity). The NS3/NS4A complex prevents phosphorylation of host IRF3, thus preventing the establishment of dsRNA induced antiviral state (By similarity). The NS3/NS4A complex induces host amino acid transporter component SLC3A2, thus contributing to HCV propagation (By similarity). NS3 RNA helicase binds to RNA and unwinds both dsDNA and dsRNA in the 3' to 5' direction, and likely resolves RNA complicated stable secondary structures in the template strand (By similarity). Binds a single ATP and catalyzes the unzipping of a single base pair of dsRNA (By similarity). Inhibits host antiviral proteins TBK1 and IRF3 thereby preventing the establishment of an antiviral state (By similarity). Cleaves host MAVS/CARDIF thereby preventing the establishment of an antiviral state (By similarity). Cleaves host TICAM1/TRIF, thereby disrupting TLR3 signaling and preventing the establishment of an antiviral state (By similarity).</text>
</comment>
<comment type="function">
    <molecule>Non-structural protein 4A</molecule>
    <text evidence="5 12">Peptide cofactor which forms a non-covalent complex with the N-terminal of NS3 serine protease (By similarity). The NS3/NS4A complex prevents phosphorylation of host IRF3, thus preventing the establishment of dsRNA induced antiviral state (By similarity). The NS3/NS4A complex induces host amino acid transporter component SLC3A2, thus contributing to HCV propagation (By similarity).</text>
</comment>
<comment type="function">
    <molecule>Non-structural protein 4B</molecule>
    <text evidence="5">Induces a specific membrane alteration that serves as a scaffold for the virus replication complex (By similarity). This membrane alteration gives rise to the so-called ER-derived membranous web that contains the replication complex (By similarity). NS4B self-interaction contributes to its function in membranous web formation (By similarity). Promotes host TRIF protein degradation in a CASP8-dependent manner thereby inhibiting host TLR3-mediated interferon signaling (By similarity). Disrupts the interaction between STING and TBK1 contributing to the inhibition of interferon signaling (By similarity).</text>
</comment>
<comment type="function">
    <molecule>Non-structural protein 5A</molecule>
    <text evidence="2 4 5 11 12">Phosphorylated protein that is indispensable for viral replication and assembly (By similarity). Both hypo- and hyperphosphorylated states are required for the viral life cycle (By similarity). The hyperphosphorylated form of NS5A is an inhibitor of viral replication (By similarity). Involved in RNA-binding and especially in binding to the viral genome (By similarity). Zinc is essential for RNA-binding (By similarity). Participates in the viral particle production as a result of its interaction with the mature viral core protein (By similarity). Its interaction with host VAPB may target the viral replication complex to vesicles (By similarity). Down-regulates viral IRES translation initiation (By similarity). Mediates interferon resistance, presumably by interacting with and inhibiting host EIF2AK2/PKR (By similarity). Prevents BIN1-induced apoptosis (By similarity). Acts as a transcriptional activator of some host genes important for viral replication when localized in the nucleus (By similarity). Via the interaction with host PACSIN2, modulates lipid droplet formation in order to promote virion assembly (By similarity). Modulates TNFRSF21/DR6 signaling pathway for viral propagation (By similarity).</text>
</comment>
<comment type="function">
    <molecule>RNA-directed RNA polymerase</molecule>
    <text evidence="5">RNA-dependent RNA polymerase that performs primer-template recognition and RNA synthesis during viral replication. Initiates RNA transcription/replication at a flavin adenine dinucleotide (FAD), resulting in a 5'- FAD cap on viral RNAs. In this way, recognition of viral 5' RNA by host pattern recognition receptors can be bypassed, thereby evading activation of antiviral pathways.</text>
</comment>
<comment type="catalytic activity">
    <molecule>Serine protease/helicase NS3</molecule>
    <reaction evidence="5">
        <text>Hydrolysis of four peptide bonds in the viral precursor polyprotein, commonly with Asp or Glu in the P6 position, Cys or Thr in P1 and Ser or Ala in P1'.</text>
        <dbReference type="EC" id="3.4.21.98"/>
    </reaction>
</comment>
<comment type="catalytic activity">
    <molecule>Serine protease/helicase NS3</molecule>
    <reaction evidence="5">
        <text>a ribonucleoside 5'-triphosphate + H2O = a ribonucleoside 5'-diphosphate + phosphate + H(+)</text>
        <dbReference type="Rhea" id="RHEA:23680"/>
        <dbReference type="ChEBI" id="CHEBI:15377"/>
        <dbReference type="ChEBI" id="CHEBI:15378"/>
        <dbReference type="ChEBI" id="CHEBI:43474"/>
        <dbReference type="ChEBI" id="CHEBI:57930"/>
        <dbReference type="ChEBI" id="CHEBI:61557"/>
        <dbReference type="EC" id="3.6.1.15"/>
    </reaction>
</comment>
<comment type="catalytic activity">
    <molecule>Serine protease/helicase NS3</molecule>
    <reaction evidence="5">
        <text>ATP + H2O = ADP + phosphate + H(+)</text>
        <dbReference type="Rhea" id="RHEA:13065"/>
        <dbReference type="ChEBI" id="CHEBI:15377"/>
        <dbReference type="ChEBI" id="CHEBI:15378"/>
        <dbReference type="ChEBI" id="CHEBI:30616"/>
        <dbReference type="ChEBI" id="CHEBI:43474"/>
        <dbReference type="ChEBI" id="CHEBI:456216"/>
        <dbReference type="EC" id="3.6.4.13"/>
    </reaction>
</comment>
<comment type="catalytic activity">
    <molecule>RNA-directed RNA polymerase</molecule>
    <reaction evidence="14">
        <text>RNA(n) + a ribonucleoside 5'-triphosphate = RNA(n+1) + diphosphate</text>
        <dbReference type="Rhea" id="RHEA:21248"/>
        <dbReference type="Rhea" id="RHEA-COMP:14527"/>
        <dbReference type="Rhea" id="RHEA-COMP:17342"/>
        <dbReference type="ChEBI" id="CHEBI:33019"/>
        <dbReference type="ChEBI" id="CHEBI:61557"/>
        <dbReference type="ChEBI" id="CHEBI:140395"/>
        <dbReference type="EC" id="2.7.7.48"/>
    </reaction>
</comment>
<comment type="cofactor">
    <molecule>Protease NS2</molecule>
    <cofactor evidence="3">
        <name>Zn(2+)</name>
        <dbReference type="ChEBI" id="CHEBI:29105"/>
    </cofactor>
    <text evidence="3">Activity of protease NS2 is dependent on zinc ions and completely inhibited by EDTA. This is probably due to the fact that NS2 protease activity needs NS3 N-terminus that binds a zinc atom (active region NS2-3).</text>
</comment>
<comment type="cofactor">
    <molecule>Serine protease/helicase NS3</molecule>
    <cofactor evidence="3">
        <name>Zn(2+)</name>
        <dbReference type="ChEBI" id="CHEBI:29105"/>
    </cofactor>
    <cofactor evidence="12">
        <name>Mg(2+)</name>
        <dbReference type="ChEBI" id="CHEBI:18420"/>
    </cofactor>
    <text evidence="3 12">Binds 1 zinc ion, which has a structural role (By similarity). The magnesium ion is essential for the helicase activity (By similarity).</text>
</comment>
<comment type="cofactor">
    <molecule>RNA-directed RNA polymerase</molecule>
    <cofactor evidence="3">
        <name>Mg(2+)</name>
        <dbReference type="ChEBI" id="CHEBI:18420"/>
    </cofactor>
    <text evidence="3">Binds 2 magnesium ion that constitute a dinuclear catalytic metal center.</text>
</comment>
<comment type="activity regulation">
    <molecule>Viroporin p7</molecule>
    <text evidence="2 5">Inhibited by the antiviral drug hexamethylene amiloride (By similarity). Inhibition by amantadine appears to be genotype-dependent (By similarity). Also inhibited by long-alkyl-chain iminosugar derivatives (By similarity).</text>
</comment>
<comment type="activity regulation">
    <molecule>RNA-directed RNA polymerase</molecule>
    <text evidence="5">Activity is up-regulated by PRK2/PKN2-mediated phosphorylation.</text>
</comment>
<comment type="subunit">
    <molecule>Mature core protein</molecule>
    <text evidence="2 4 5 6 8 9 11">Homooligomer (By similarity). Interacts with E1 (via C-terminus) (By similarity). Interacts with the non-structural protein 5A (By similarity). Interacts (via N-terminus) with host STAT1 (via SH2 domain); this interaction results in decreased STAT1 phosphorylation and ubiquitin-mediated proteasome-dependent STAT1 degradation, leading to decreased IFN-stimulated gene transcription (By similarity). Interacts with host STAT3; this interaction constitutively activates STAT3 (By similarity). Interacts with host LTBR receptor (By similarity). Interacts with host TNFRSF1A receptor and possibly induces apoptosis (By similarity). Interacts with host HNRPK (By similarity). Interacts with host YWHAE (By similarity). Interacts with host UBE3A/E6AP (By similarity). Interacts with host DDX3X (By similarity). Interacts with host APOA2 (By similarity). Interacts with host RXRA protein (By similarity). Interacts with host SP110 isoform 3/Sp110b; this interaction sequesters the transcriptional corepressor SP110 away from the nucleus (By similarity). Interacts with host CREB3 nuclear transcription protein; this interaction triggers cell transformation (By similarity). Interacts with host ACY3 (By similarity). Interacts with host C1QR1 (By similarity). Interacts with host RBM24; this interaction, which enhances the interaction of the mature core protein with 5'-UTR, may inhibit viral translation and favor replication (By similarity). Interacts with host EIF2AK2/PKR; this interaction induces the autophosphorylation of EIF2AK2 (By similarity). Part of the viral assembly initiation complex composed of NS2, E1, E2, NS3, NS4A, NS5A and the mature core protein (By similarity).</text>
</comment>
<comment type="subunit">
    <molecule>Envelope glycoprotein E1</molecule>
    <text evidence="5 11">Forms a heterodimer with envelope glycoprotein E2 (By similarity). Interacts with mature core protein (By similarity). Interacts with protease NS2 (By similarity). The heterodimer E1/E2 interacts with host CLDN1; this interaction plays a role in viral entry into host cell (By similarity). Interacts with host SPSB2 (via C-terminus) (By similarity). Part of the viral assembly initiation complex composed of NS2, E1, E2, NS3, NS4A, NS5A and the mature core protein (By similarity). Interacts with host NEURL3; this interaction prevents E1 binding to glycoprotein E2 (By similarity).</text>
</comment>
<comment type="subunit">
    <molecule>Envelope glycoprotein E2</molecule>
    <text evidence="5 11 12">Forms a heterodimer with envelope glycoprotein E1 (By similarity). Interacts with host CD81 and SCARB1 receptors; these interactions play a role in viral entry into host cell (By similarity). Interacts with host EIF2AK2/PKR; this interaction inhibits EIF2AK2 and probably allows the virus to evade the innate immune response (By similarity). Interacts with host CD209/DC-SIGN and CLEC4M/DC-SIGNR (By similarity). Interact with host SPCS1; this interaction is essential for viral particle assembly (By similarity). Interacts with protease NS2 (By similarity). The heterodimer E1/E2 interacts with host CLDN1; this interaction plays a role in viral entry into host cell (By similarity). Part of the viral assembly initiation complex composed of NS2, E1, E2, NS3, NS4A, NS5A and the mature core protein (By similarity). Interacts with host SLC3A2/4F2hc; the interaction may facilitate viral entry into host cell (By similarity). Interacts with human PLSCR1 (By similarity).</text>
</comment>
<comment type="subunit">
    <molecule>Viroporin p7</molecule>
    <text evidence="1 5 11">Homohexamer (By similarity). Homoheptamer (By similarity). Interacts with protease NS2 (By similarity).</text>
</comment>
<comment type="subunit">
    <molecule>Protease NS2</molecule>
    <text evidence="5 11">Homodimer (By similarity). Interacts with host SPCS1; this interaction is essential for viral particle assembly (By similarity). Interacts with envelope glycoprotein E1 (By similarity). Interacts with envelope glycoprotein E2 (By similarity). Interacts with viroporin p7 (By similarity). Interacts with serine protease/helicase NS3 (By similarity). Part of the replication complex composed of NS2, NS3, NS4A, NS4B, NS5A and the RNA-directed RNA polymerase embedded in an ER-derived membranous web (By similarity). Part of the viral assembly initiation complex composed of NS2, E1, E2, NS3, NS4A, NS5A and the mature core protein (By similarity).</text>
</comment>
<comment type="subunit">
    <molecule>Serine protease/helicase NS3</molecule>
    <text evidence="3 5 11 12">Interacts with protease NS2 (By similarity). Interacts with non-structural protein 4A; this interaction stabilizes the folding of NS3 serine protease (By similarity). NS3-NS4A interaction is essential for NS3 activation and allows membrane anchorage of the latter (By similarity). NS3/NS4A complex also prevents phosphorylation of host IRF3, thus preventing the establishment of dsRNA induced antiviral state (By similarity). Interacts with host MAVS; this interaction leads to the cleavage and inhibition of host MAVS (By similarity). Interacts with host TICAM1; this interaction leads to the cleavage and inhibition of host TICAM1 (By similarity). Interacts with host TANK-binding kinase/TBK1; this interaction results in the inhibition of the association between TBK1 and IRF3, which leads to the inhibition of IRF3 activation (By similarity). Interacts with host RBM24 (By similarity). Part of the replication complex composed of NS2, NS3, NS4A, NS4B, NS5A and the RNA-directed RNA polymerase embedded in an ER-derived membranous web (By similarity). Part of the viral assembly initiation complex composed of NS2, E1, E2, NS3, NS4A, NS5A and the mature core protein (By similarity).</text>
</comment>
<comment type="subunit">
    <molecule>Non-structural protein 4A</molecule>
    <text evidence="2 3 5 11">Interacts with NS3 serine protease; this interaction stabilizes the folding of NS3 serine protease (By similarity). NS3-NS4A interaction is essential for NS3 activation and allows membrane anchorage of the latter (By similarity). Interacts with non-structural protein 5A (via N-terminus) (By similarity). Part of the replication complex composed of NS2, NS3, NS4A, NS4B, NS5A and the RNA-directed RNA polymerase embedded in an ER-derived membranous web (By similarity). Part of the viral assembly initiation complex composed of NS2, E1, E2, NS3, NS4A, NS5A and the mature core protein (By similarity).</text>
</comment>
<comment type="subunit">
    <molecule>Non-structural protein 4B</molecule>
    <text evidence="5 11">Homomultimer (By similarity). Interacts with non-structural protein NS5A (By similarity). Interacts with host PLA2G4C; this interaction likely initiates the recruitment of replication complexes to lipid droplets (By similarity). Interacts with host STING; this interaction disrupts the interaction between STING and TBK1 thereby suppressing the interferon signaling (By similarity). Part of the replication complex composed of NS2, NS3, NS4A, NS4B, NS5A and the RNA-directed RNA polymerase embedded in an ER-derived membranous web (By similarity).</text>
</comment>
<comment type="subunit">
    <molecule>Non-structural protein 5A</molecule>
    <text evidence="2 3 4 5 11">Monomer. Homodimer; dimerization is required for RNA-binding (By similarity). Interacts with the mature core protein (By similarity). Interacts (via N-terminus) with non-structural protein 4A (By similarity). Interacts with non-structural protein 4B. Interacts (via region D2) with RNA-directed RNA polymerase (By similarity). Part of the viral assembly initiation complex composed of NS2, E1, E2, NS3, NS4A, NS5A and the mature core protein (By similarity). Part of the replication complex composed of NS2, NS3, NS4A, NS4B, NS5A and the RNA-directed RNA polymerase embedded in an ER-derived membranous web (By similarity). Interacts with host GRB2 (By similarity). Interacts with host BIN1 (By similarity). Interacts with host PIK3R1 (By similarity). Interacts with host SRCAP (By similarity). Interacts with host FKBP8 (By similarity). Interacts (via C-terminus) with host VAPB (via MSP domain). Interacts with host EIF2AK2/PKR; this interaction leads to disruption of EIF2AK2 dimerization by NS5A and probably allows the virus to evade the innate immune response. Interacts (via N-terminus) with host PACSIN2 (via N-terminus); this interaction attenuates protein kinase C alpha-mediated phosphorylation of PACSIN2 by disrupting the interaction between PACSIN2 and PRKCA (By similarity). Interacts (via N-terminus) with host SRC kinase (via SH2 domain) (By similarity). Interacts with most Src-family kinases (By similarity). Interacts with host IFI27 and SKP2; promotes the ubiquitin-mediated proteasomal degradation of NS5A (By similarity). Interacts with host GPS2 (By similarity). Interacts with host TNFRSF21; this interaction allows the modulation by the virus of JNK, p38 MAPK, STAT3, and Akt signaling pathways in a DR6-dependent manner. Interacts (via N-terminus) with host CIDEB (via N-terminus); this interaction seems to regulate the association of HCV particles with APOE (By similarity). Interacts with host CHKA/Choline Kinase-alpha; CHKA bridges host PI4KA and NS5A and potentiates NS5A-stimulated PI4KA activity, which then facilitates the targeting of the ternary complex to the ER for viral replication (By similarity). Interacts with host SPSB2 (via C-terminus); this interaction targets NS5A for ubiquitination and degradation (By similarity). Interacts with host RAB18; this interaction may promote the association of NS5A and other replicase components with lipid droplets (By similarity). Interacts (via region D2) with host PPIA/CYPA; the interaction stimulates RNA-binding ability of NS5A and is dependent on the peptidyl-prolyl cis-trans isomerase activity of PPIA/CYPA. Interacts with host TRIM14; this interaction induces the degradation of NS5A (By similarity).</text>
</comment>
<comment type="subunit">
    <molecule>RNA-directed RNA polymerase</molecule>
    <text evidence="5">Homooligomer (By similarity). Interacts with non-structural protein 5A (By similarity). Interacts with host VAPB (By similarity). Interacts with host PRK2/PKN2 (By similarity). Interacts with host HNRNPA1 and SEPT6; these interactions facilitate viral replication (By similarity). Part of the replication complex composed of NS2, NS3, NS4A, NS4B, NS5A and the RNA-directed RNA polymerase (By similarity).</text>
</comment>
<comment type="subcellular location">
    <molecule>Core protein precursor</molecule>
    <subcellularLocation>
        <location evidence="4">Host endoplasmic reticulum membrane</location>
        <topology evidence="13">Single-pass membrane protein</topology>
    </subcellularLocation>
    <subcellularLocation>
        <location evidence="4">Host mitochondrion membrane</location>
        <topology evidence="13">Single-pass type I membrane protein</topology>
    </subcellularLocation>
    <text>The C-terminal transmembrane domain of the core protein precursor contains an ER signal leading the nascent polyprotein to the ER membrane.</text>
</comment>
<comment type="subcellular location">
    <molecule>Mature core protein</molecule>
    <subcellularLocation>
        <location evidence="11">Virion</location>
    </subcellularLocation>
    <subcellularLocation>
        <location evidence="11">Host cytoplasm</location>
    </subcellularLocation>
    <subcellularLocation>
        <location evidence="2">Host nucleus</location>
    </subcellularLocation>
    <subcellularLocation>
        <location evidence="11">Host lipid droplet</location>
    </subcellularLocation>
    <text evidence="5">Only a minor proportion of core protein is present in the nucleus (By similarity). Probably present on the surface of lipid droplets (By similarity).</text>
</comment>
<comment type="subcellular location">
    <molecule>Envelope glycoprotein E1</molecule>
    <subcellularLocation>
        <location evidence="20">Virion membrane</location>
        <topology evidence="20">Single-pass type I membrane protein</topology>
    </subcellularLocation>
    <subcellularLocation>
        <location>Host endoplasmic reticulum membrane</location>
        <topology evidence="5">Single-pass type I membrane protein</topology>
    </subcellularLocation>
    <text evidence="5">The C-terminal transmembrane domain acts as a signal sequence and forms a hairpin structure before cleavage by host signal peptidase (By similarity). After cleavage, the membrane sequence is retained at the C-terminus of the protein, serving as ER membrane anchor (By similarity). A reorientation of the second hydrophobic stretch occurs after cleavage producing a single reoriented transmembrane domain (By similarity). These events explain the final topology of the protein (By similarity).</text>
</comment>
<comment type="subcellular location">
    <molecule>Envelope glycoprotein E2</molecule>
    <subcellularLocation>
        <location evidence="20">Virion membrane</location>
        <topology evidence="20">Single-pass type I membrane protein</topology>
    </subcellularLocation>
    <subcellularLocation>
        <location>Host endoplasmic reticulum membrane</location>
        <topology evidence="5">Single-pass type I membrane protein</topology>
    </subcellularLocation>
    <subcellularLocation>
        <location evidence="12">Host lipid droplet</location>
    </subcellularLocation>
    <text evidence="5">The C-terminal transmembrane domain acts as a signal sequence and forms a hairpin structure before cleavage by host signal peptidase (By similarity). After cleavage, the membrane sequence is retained at the C-terminus of the protein, serving as ER membrane anchor (By similarity). A reorientation of the second hydrophobic stretch occurs after cleavage producing a single reoriented transmembrane domain (By similarity). These events explain the final topology of the protein (By similarity).</text>
</comment>
<comment type="subcellular location">
    <molecule>Viroporin p7</molecule>
    <subcellularLocation>
        <location evidence="5">Host endoplasmic reticulum membrane</location>
        <topology evidence="5">Multi-pass membrane protein</topology>
    </subcellularLocation>
    <subcellularLocation>
        <location evidence="5">Host mitochondrion</location>
    </subcellularLocation>
    <subcellularLocation>
        <location evidence="5">Host cell membrane</location>
    </subcellularLocation>
    <text evidence="5">The C-terminus of p7 membrane domain acts as a signal sequence (By similarity). After cleavage by host signal peptidase, the membrane sequence is retained at the C-terminus of the protein, serving as ER membrane anchor (By similarity). ER retention of p7 is leaky and a small fraction reaches the plasma membrane (By similarity).</text>
</comment>
<comment type="subcellular location">
    <molecule>Protease NS2</molecule>
    <subcellularLocation>
        <location evidence="5">Host endoplasmic reticulum membrane</location>
        <topology evidence="5">Multi-pass membrane protein</topology>
    </subcellularLocation>
    <subcellularLocation>
        <location evidence="12">Host lipid droplet</location>
    </subcellularLocation>
    <text evidence="11">Probably present on the surface of lipid droplets.</text>
</comment>
<comment type="subcellular location">
    <molecule>Serine protease/helicase NS3</molecule>
    <subcellularLocation>
        <location evidence="20">Host endoplasmic reticulum membrane</location>
        <topology evidence="20">Peripheral membrane protein</topology>
    </subcellularLocation>
    <text evidence="20">NS3 is associated to the ER membrane through its binding to NS4A.</text>
</comment>
<comment type="subcellular location">
    <molecule>Non-structural protein 4A</molecule>
    <subcellularLocation>
        <location evidence="20">Host endoplasmic reticulum membrane</location>
        <topology evidence="20">Single-pass type I membrane protein</topology>
    </subcellularLocation>
    <text>Host membrane insertion occurs after processing by the NS3 protease.</text>
</comment>
<comment type="subcellular location">
    <molecule>Non-structural protein 4B</molecule>
    <subcellularLocation>
        <location evidence="5">Host endoplasmic reticulum membrane</location>
        <topology evidence="5">Multi-pass membrane protein</topology>
    </subcellularLocation>
    <text evidence="5">A reorientation of the N-terminus into the ER lumen occurs post-translationally.</text>
</comment>
<comment type="subcellular location">
    <molecule>Non-structural protein 5A</molecule>
    <subcellularLocation>
        <location evidence="5">Host endoplasmic reticulum membrane</location>
        <topology evidence="5">Peripheral membrane protein</topology>
    </subcellularLocation>
    <subcellularLocation>
        <location evidence="5">Host cytoplasm</location>
        <location evidence="5">Host perinuclear region</location>
    </subcellularLocation>
    <subcellularLocation>
        <location evidence="2">Host mitochondrion</location>
    </subcellularLocation>
    <subcellularLocation>
        <location evidence="5">Host cytoplasm</location>
    </subcellularLocation>
    <subcellularLocation>
        <location evidence="2">Host nucleus</location>
    </subcellularLocation>
    <subcellularLocation>
        <location evidence="12">Host lipid droplet</location>
    </subcellularLocation>
    <text evidence="2 5">Host membrane insertion occurs after processing by the NS3 protease (By similarity). Localizes at the surface of lipid droplets (By similarity).</text>
</comment>
<comment type="subcellular location">
    <molecule>RNA-directed RNA polymerase</molecule>
    <subcellularLocation>
        <location evidence="5">Host cytoplasm</location>
    </subcellularLocation>
    <subcellularLocation>
        <location>Host endoplasmic reticulum membrane</location>
        <topology evidence="5">Single-pass type IV membrane protein</topology>
    </subcellularLocation>
    <text evidence="5">Host membrane insertion occurs after processing by the NS3 protease.</text>
</comment>
<comment type="domain">
    <molecule>Envelope glycoprotein E1</molecule>
    <text evidence="5">The transmembrane regions of envelope E1 and E2 glycoproteins are involved in heterodimer formation, ER localization, and assembly of these proteins.</text>
</comment>
<comment type="domain">
    <molecule>Envelope glycoprotein E2</molecule>
    <text evidence="3 5">The transmembrane regions of envelope E1 and E2 glycoproteins are involved in heterodimer formation, ER localization, and assembly of these proteins (By similarity). Envelope E2 glycoprotein contain two highly variable regions called hypervariable region 1 and 2 (HVR1 and HVR2) (By similarity). E2 also contain two segments involved in CD81-binding (By similarity). HVR1 is implicated in the SCARB1-mediated cell entry and probably acts as a regulator of the association of particles with lipids (By similarity).</text>
</comment>
<comment type="domain">
    <molecule>Protease NS2</molecule>
    <text evidence="3">The N-terminus of NS3 is required for the catalytic activity of protease NS2 (By similarity). The minimal catalytic region includes the C-terminus of NS2 and the N-terminus NS3 protease domain (active region NS2-3) (By similarity).</text>
</comment>
<comment type="domain">
    <molecule>Serine protease/helicase NS3</molecule>
    <text evidence="2 5">The N-terminal one-third contains the protease activity (By similarity). This region contains a zinc atom that does not belong to the active site, but may play a structural rather than a catalytic role (By similarity). This region is essential for the activity of protease NS2, maybe by contributing to the folding of the latter (By similarity). The NTPase/helicase activity is located in the twothirds C-terminus of NS3, this domain contains the NTPase and RNA-binding regions (By similarity).</text>
</comment>
<comment type="domain">
    <molecule>Non-structural protein 4B</molecule>
    <text evidence="11">Contains a glycine zipper region that critically contributes to the biogenesis of functional ER-derived replication organelles.</text>
</comment>
<comment type="domain">
    <molecule>Non-structural protein 5A</molecule>
    <text evidence="2 5">The N-terminus of NS5A acts as membrane anchor (By similarity). The central part of NS5A contains a variable region called interferon sensitivity determining region (ISDR) and seems to be intrinsically disordered and interacts with NS5B and host EIF2AK2 (By similarity). The C-terminus of NS5A contains a variable region called variable region 3 (V3) (By similarity). ISDR and V3 may be involved in sensitivity and/or resistance to IFN-alpha therapy (By similarity). The C-terminus contains a nuclear localization signal (By similarity). The SH3-binding domain is involved in the interaction with host BIN1, GRB2 and Src-family kinases (By similarity).</text>
</comment>
<comment type="PTM">
    <molecule>Genome polyprotein</molecule>
    <text evidence="4 5">Specific enzymatic cleavages in vivo yield mature proteins (By similarity). The structural proteins, core, E1, E2 and p7 are produced by proteolytic processing by host signal peptidases (By similarity). The core protein precursor is synthesized as a 23 kDa, which is retained in the ER membrane through the hydrophobic signal peptide (By similarity). Cleavage by the signal peptidase releases the 21 kDa mature core protein (By similarity). The cleavage of the core protein precursor occurs between aminoacids 176 and 188 but the exact cleavage site is not known (By similarity). Some degraded forms of the core protein appear as well during the course of infection (By similarity). The other proteins (p7, NS2, NS3, NS4A, NS4B, NS5A and NS5B) are cleaved by the viral proteases (By similarity). Autoprocessing between NS2 and NS3 is mediated by the NS2 cysteine protease catalytic domain and regulated by the NS3 N-terminal domain (By similarity).</text>
</comment>
<comment type="PTM">
    <molecule>Mature core protein</molecule>
    <text evidence="7">Phosphorylated by host PKC and PKA.</text>
</comment>
<comment type="PTM">
    <molecule>Mature core protein</molecule>
    <text evidence="8">Ubiquitinated; mediated by UBE3A and leading to core protein subsequent proteasomal degradation.</text>
</comment>
<comment type="PTM">
    <molecule>Envelope glycoprotein E1</molecule>
    <text evidence="5">Highly N-glycosylated.</text>
</comment>
<comment type="PTM">
    <molecule>Envelope glycoprotein E2</molecule>
    <text evidence="5">Highly N-glycosylated.</text>
</comment>
<comment type="PTM">
    <molecule>Protease NS2</molecule>
    <text evidence="5">Palmitoylation is required for NS2/3 autoprocessing and E2 recruitment to membranes.</text>
</comment>
<comment type="PTM">
    <molecule>Non-structural protein 4B</molecule>
    <text evidence="5">Palmitoylated. This modification may play a role in its polymerization or in protein-protein interactions.</text>
</comment>
<comment type="PTM">
    <molecule>Non-structural protein 5A</molecule>
    <text evidence="2 4">Phosphorylated on serines in a basal form termed p56 (By similarity). p58 is a hyperphosphorylated form of p56 (By similarity). p56 and p58 coexist in the cell in roughly equivalent amounts (By similarity). Hyperphosphorylation is dependent on the presence of NS4A (By similarity). Host CSNK1A1/CKI-alpha or RPS6KB1 kinases may be responsible for NS5A phosphorylation (By similarity).</text>
</comment>
<comment type="PTM">
    <molecule>Non-structural protein 5A</molecule>
    <text evidence="11">Tyrosine phosphorylation is essential for the interaction with host SRC.</text>
</comment>
<comment type="PTM">
    <molecule>RNA-directed RNA polymerase</molecule>
    <text evidence="2">The N-terminus is phosphorylated by host PRK2/PKN2.</text>
</comment>
<comment type="miscellaneous">
    <text evidence="20">Viral particle assembly takes place at the surface of ER-derived membranes in close proximity to lipid droplets. NS2 associates with E1/E2 glycoproteins, NS3 and NS5A, which interacts with the viral RNA and core protein to promote genome encapsidation. The nucleocapsid buds at the ER membrane where E1/E2 glycoproteins are anchored and afterward associate with nascent lipid droplet to acquire APOE and APOC. Secretion of viral particles is probably regulated by viroporin p7.</text>
</comment>
<comment type="miscellaneous">
    <molecule>Non-structural protein 5A</molecule>
    <text evidence="20">Cell culture adaptation of the virus leads to mutations in NS5A, reducing its inhibitory effect on replication.</text>
</comment>
<comment type="miscellaneous">
    <molecule>Mature core protein</molecule>
    <text evidence="2">Exerts viral interference on hepatitis B virus when HCV and HBV coinfect the same cell, by suppressing HBV gene expression, RNA encapsidation and budding.</text>
</comment>
<comment type="similarity">
    <text evidence="20">Belongs to the hepacivirus polyprotein family.</text>
</comment>
<comment type="caution">
    <text evidence="20">The core gene probably also codes for alternative reading frame proteins (ARFPs). Many functions depicted for the core protein might belong to the ARFPs.</text>
</comment>
<dbReference type="EC" id="3.4.22.-" evidence="3"/>
<dbReference type="EC" id="3.4.21.98" evidence="5"/>
<dbReference type="EC" id="3.6.1.15" evidence="5"/>
<dbReference type="EC" id="3.6.4.13" evidence="5"/>
<dbReference type="EC" id="2.7.7.48" evidence="5"/>
<dbReference type="EMBL" id="D84263">
    <property type="protein sequence ID" value="BAA32665.1"/>
    <property type="molecule type" value="Genomic_RNA"/>
</dbReference>
<dbReference type="SMR" id="O92530"/>
<dbReference type="MEROPS" id="S29.001"/>
<dbReference type="TCDB" id="1.A.53.1.6">
    <property type="family name" value="the hepatitis c virus p7 viroporin cation-selective channel (hcv-p7) family"/>
</dbReference>
<dbReference type="euHCVdb" id="D84263"/>
<dbReference type="Proteomes" id="UP000008103">
    <property type="component" value="Genome"/>
</dbReference>
<dbReference type="GO" id="GO:0044167">
    <property type="term" value="C:host cell endoplasmic reticulum membrane"/>
    <property type="evidence" value="ECO:0007669"/>
    <property type="project" value="UniProtKB-SubCell"/>
</dbReference>
<dbReference type="GO" id="GO:0044186">
    <property type="term" value="C:host cell lipid droplet"/>
    <property type="evidence" value="ECO:0007669"/>
    <property type="project" value="UniProtKB-SubCell"/>
</dbReference>
<dbReference type="GO" id="GO:0044191">
    <property type="term" value="C:host cell mitochondrial membrane"/>
    <property type="evidence" value="ECO:0007669"/>
    <property type="project" value="UniProtKB-SubCell"/>
</dbReference>
<dbReference type="GO" id="GO:0042025">
    <property type="term" value="C:host cell nucleus"/>
    <property type="evidence" value="ECO:0007669"/>
    <property type="project" value="UniProtKB-SubCell"/>
</dbReference>
<dbReference type="GO" id="GO:0044220">
    <property type="term" value="C:host cell perinuclear region of cytoplasm"/>
    <property type="evidence" value="ECO:0007669"/>
    <property type="project" value="UniProtKB-SubCell"/>
</dbReference>
<dbReference type="GO" id="GO:0020002">
    <property type="term" value="C:host cell plasma membrane"/>
    <property type="evidence" value="ECO:0007669"/>
    <property type="project" value="UniProtKB-SubCell"/>
</dbReference>
<dbReference type="GO" id="GO:0016020">
    <property type="term" value="C:membrane"/>
    <property type="evidence" value="ECO:0007669"/>
    <property type="project" value="UniProtKB-KW"/>
</dbReference>
<dbReference type="GO" id="GO:1990904">
    <property type="term" value="C:ribonucleoprotein complex"/>
    <property type="evidence" value="ECO:0007669"/>
    <property type="project" value="UniProtKB-KW"/>
</dbReference>
<dbReference type="GO" id="GO:0019031">
    <property type="term" value="C:viral envelope"/>
    <property type="evidence" value="ECO:0007669"/>
    <property type="project" value="UniProtKB-KW"/>
</dbReference>
<dbReference type="GO" id="GO:0019013">
    <property type="term" value="C:viral nucleocapsid"/>
    <property type="evidence" value="ECO:0007669"/>
    <property type="project" value="UniProtKB-KW"/>
</dbReference>
<dbReference type="GO" id="GO:0055036">
    <property type="term" value="C:virion membrane"/>
    <property type="evidence" value="ECO:0007669"/>
    <property type="project" value="UniProtKB-SubCell"/>
</dbReference>
<dbReference type="GO" id="GO:0005524">
    <property type="term" value="F:ATP binding"/>
    <property type="evidence" value="ECO:0007669"/>
    <property type="project" value="UniProtKB-KW"/>
</dbReference>
<dbReference type="GO" id="GO:0016887">
    <property type="term" value="F:ATP hydrolysis activity"/>
    <property type="evidence" value="ECO:0007669"/>
    <property type="project" value="RHEA"/>
</dbReference>
<dbReference type="GO" id="GO:0015267">
    <property type="term" value="F:channel activity"/>
    <property type="evidence" value="ECO:0007669"/>
    <property type="project" value="UniProtKB-KW"/>
</dbReference>
<dbReference type="GO" id="GO:0004197">
    <property type="term" value="F:cysteine-type endopeptidase activity"/>
    <property type="evidence" value="ECO:0007669"/>
    <property type="project" value="InterPro"/>
</dbReference>
<dbReference type="GO" id="GO:0003723">
    <property type="term" value="F:RNA binding"/>
    <property type="evidence" value="ECO:0007669"/>
    <property type="project" value="UniProtKB-KW"/>
</dbReference>
<dbReference type="GO" id="GO:0003724">
    <property type="term" value="F:RNA helicase activity"/>
    <property type="evidence" value="ECO:0007669"/>
    <property type="project" value="UniProtKB-EC"/>
</dbReference>
<dbReference type="GO" id="GO:0003968">
    <property type="term" value="F:RNA-directed RNA polymerase activity"/>
    <property type="evidence" value="ECO:0007669"/>
    <property type="project" value="UniProtKB-KW"/>
</dbReference>
<dbReference type="GO" id="GO:0004252">
    <property type="term" value="F:serine-type endopeptidase activity"/>
    <property type="evidence" value="ECO:0007669"/>
    <property type="project" value="InterPro"/>
</dbReference>
<dbReference type="GO" id="GO:0017124">
    <property type="term" value="F:SH3 domain binding"/>
    <property type="evidence" value="ECO:0007669"/>
    <property type="project" value="UniProtKB-KW"/>
</dbReference>
<dbReference type="GO" id="GO:0005198">
    <property type="term" value="F:structural molecule activity"/>
    <property type="evidence" value="ECO:0007669"/>
    <property type="project" value="InterPro"/>
</dbReference>
<dbReference type="GO" id="GO:0008270">
    <property type="term" value="F:zinc ion binding"/>
    <property type="evidence" value="ECO:0007669"/>
    <property type="project" value="InterPro"/>
</dbReference>
<dbReference type="GO" id="GO:0075512">
    <property type="term" value="P:clathrin-dependent endocytosis of virus by host cell"/>
    <property type="evidence" value="ECO:0007669"/>
    <property type="project" value="UniProtKB-KW"/>
</dbReference>
<dbReference type="GO" id="GO:0039654">
    <property type="term" value="P:fusion of virus membrane with host endosome membrane"/>
    <property type="evidence" value="ECO:0007669"/>
    <property type="project" value="UniProtKB-KW"/>
</dbReference>
<dbReference type="GO" id="GO:0034220">
    <property type="term" value="P:monoatomic ion transmembrane transport"/>
    <property type="evidence" value="ECO:0007669"/>
    <property type="project" value="UniProtKB-KW"/>
</dbReference>
<dbReference type="GO" id="GO:0006508">
    <property type="term" value="P:proteolysis"/>
    <property type="evidence" value="ECO:0007669"/>
    <property type="project" value="UniProtKB-KW"/>
</dbReference>
<dbReference type="GO" id="GO:0039520">
    <property type="term" value="P:symbiont-mediated activation of host autophagy"/>
    <property type="evidence" value="ECO:0007669"/>
    <property type="project" value="UniProtKB-KW"/>
</dbReference>
<dbReference type="GO" id="GO:0039645">
    <property type="term" value="P:symbiont-mediated perturbation of host cell cycle G1/S transition checkpoint"/>
    <property type="evidence" value="ECO:0007669"/>
    <property type="project" value="UniProtKB-KW"/>
</dbReference>
<dbReference type="GO" id="GO:0039545">
    <property type="term" value="P:symbiont-mediated suppression of host cytoplasmic pattern recognition receptor signaling pathway via inhibition of MAVS activity"/>
    <property type="evidence" value="ECO:0007669"/>
    <property type="project" value="UniProtKB-KW"/>
</dbReference>
<dbReference type="GO" id="GO:0039563">
    <property type="term" value="P:symbiont-mediated suppression of host JAK-STAT cascade via inhibition of STAT1 activity"/>
    <property type="evidence" value="ECO:0007669"/>
    <property type="project" value="UniProtKB-KW"/>
</dbReference>
<dbReference type="GO" id="GO:0039527">
    <property type="term" value="P:symbiont-mediated suppression of host TRAF-mediated signal transduction"/>
    <property type="evidence" value="ECO:0007669"/>
    <property type="project" value="UniProtKB-KW"/>
</dbReference>
<dbReference type="GO" id="GO:0039502">
    <property type="term" value="P:symbiont-mediated suppression of host type I interferon-mediated signaling pathway"/>
    <property type="evidence" value="ECO:0007669"/>
    <property type="project" value="UniProtKB-KW"/>
</dbReference>
<dbReference type="GO" id="GO:0019087">
    <property type="term" value="P:symbiont-mediated transformation of host cell"/>
    <property type="evidence" value="ECO:0007669"/>
    <property type="project" value="InterPro"/>
</dbReference>
<dbReference type="GO" id="GO:0039694">
    <property type="term" value="P:viral RNA genome replication"/>
    <property type="evidence" value="ECO:0007669"/>
    <property type="project" value="InterPro"/>
</dbReference>
<dbReference type="GO" id="GO:0019062">
    <property type="term" value="P:virion attachment to host cell"/>
    <property type="evidence" value="ECO:0007669"/>
    <property type="project" value="UniProtKB-KW"/>
</dbReference>
<dbReference type="CDD" id="cd20903">
    <property type="entry name" value="HCV_p7"/>
    <property type="match status" value="1"/>
</dbReference>
<dbReference type="CDD" id="cd23202">
    <property type="entry name" value="Hepacivirus_RdRp"/>
    <property type="match status" value="1"/>
</dbReference>
<dbReference type="FunFam" id="2.40.10.120:FF:000003">
    <property type="entry name" value="Genome polyprotein"/>
    <property type="match status" value="1"/>
</dbReference>
<dbReference type="FunFam" id="3.30.160.890:FF:000001">
    <property type="entry name" value="Genome polyprotein"/>
    <property type="match status" value="1"/>
</dbReference>
<dbReference type="FunFam" id="3.30.70.270:FF:000015">
    <property type="entry name" value="Genome polyprotein"/>
    <property type="match status" value="1"/>
</dbReference>
<dbReference type="FunFam" id="3.40.50.300:FF:000557">
    <property type="entry name" value="Genome polyprotein"/>
    <property type="match status" value="1"/>
</dbReference>
<dbReference type="FunFam" id="3.40.50.300:FF:000717">
    <property type="entry name" value="Genome polyprotein"/>
    <property type="match status" value="1"/>
</dbReference>
<dbReference type="Gene3D" id="2.40.10.120">
    <property type="match status" value="1"/>
</dbReference>
<dbReference type="Gene3D" id="3.30.70.270">
    <property type="match status" value="2"/>
</dbReference>
<dbReference type="Gene3D" id="6.10.250.1610">
    <property type="match status" value="1"/>
</dbReference>
<dbReference type="Gene3D" id="6.10.250.1750">
    <property type="match status" value="1"/>
</dbReference>
<dbReference type="Gene3D" id="6.10.250.2920">
    <property type="match status" value="1"/>
</dbReference>
<dbReference type="Gene3D" id="2.20.25.210">
    <property type="entry name" value="Hepatitis C NS5A, domain 1B"/>
    <property type="match status" value="1"/>
</dbReference>
<dbReference type="Gene3D" id="4.10.710.10">
    <property type="entry name" value="Hepatitis C Virus Capsid Protein, Chain A"/>
    <property type="match status" value="1"/>
</dbReference>
<dbReference type="Gene3D" id="3.30.160.890">
    <property type="entry name" value="Hepatitis C virus envelope glycoprotein E1, chain C"/>
    <property type="match status" value="1"/>
</dbReference>
<dbReference type="Gene3D" id="2.30.30.710">
    <property type="entry name" value="Hepatitis C virus non-structural protein NS2, C-terminal domain"/>
    <property type="match status" value="1"/>
</dbReference>
<dbReference type="Gene3D" id="1.20.1280.150">
    <property type="entry name" value="Hepatitis C virus non-structural protein NS2, N-terminal domain"/>
    <property type="match status" value="1"/>
</dbReference>
<dbReference type="Gene3D" id="2.20.25.220">
    <property type="entry name" value="Hepatitis C virus NS5A, 1B domain"/>
    <property type="match status" value="1"/>
</dbReference>
<dbReference type="Gene3D" id="3.40.50.300">
    <property type="entry name" value="P-loop containing nucleotide triphosphate hydrolases"/>
    <property type="match status" value="2"/>
</dbReference>
<dbReference type="Gene3D" id="1.10.820.10">
    <property type="entry name" value="RNA Helicase Chain A , domain 3"/>
    <property type="match status" value="1"/>
</dbReference>
<dbReference type="Gene3D" id="2.40.10.10">
    <property type="entry name" value="Trypsin-like serine proteases"/>
    <property type="match status" value="1"/>
</dbReference>
<dbReference type="InterPro" id="IPR043502">
    <property type="entry name" value="DNA/RNA_pol_sf"/>
</dbReference>
<dbReference type="InterPro" id="IPR011492">
    <property type="entry name" value="Flavi_DEAD"/>
</dbReference>
<dbReference type="InterPro" id="IPR002521">
    <property type="entry name" value="HCV_Core_C"/>
</dbReference>
<dbReference type="InterPro" id="IPR044896">
    <property type="entry name" value="HCV_core_chain_A"/>
</dbReference>
<dbReference type="InterPro" id="IPR002522">
    <property type="entry name" value="HCV_core_N"/>
</dbReference>
<dbReference type="InterPro" id="IPR002519">
    <property type="entry name" value="HCV_Env"/>
</dbReference>
<dbReference type="InterPro" id="IPR002531">
    <property type="entry name" value="HCV_NS1"/>
</dbReference>
<dbReference type="InterPro" id="IPR002518">
    <property type="entry name" value="HCV_NS2"/>
</dbReference>
<dbReference type="InterPro" id="IPR042205">
    <property type="entry name" value="HCV_NS2_C"/>
</dbReference>
<dbReference type="InterPro" id="IPR042209">
    <property type="entry name" value="HCV_NS2_N"/>
</dbReference>
<dbReference type="InterPro" id="IPR000745">
    <property type="entry name" value="HCV_NS4a"/>
</dbReference>
<dbReference type="InterPro" id="IPR001490">
    <property type="entry name" value="HCV_NS4b"/>
</dbReference>
<dbReference type="InterPro" id="IPR002868">
    <property type="entry name" value="HCV_NS5a"/>
</dbReference>
<dbReference type="InterPro" id="IPR013192">
    <property type="entry name" value="HCV_NS5A_1a"/>
</dbReference>
<dbReference type="InterPro" id="IPR013193">
    <property type="entry name" value="HCV_NS5a_1B_dom"/>
</dbReference>
<dbReference type="InterPro" id="IPR038568">
    <property type="entry name" value="HCV_NS5A_1B_sf"/>
</dbReference>
<dbReference type="InterPro" id="IPR024350">
    <property type="entry name" value="HCV_NS5a_C"/>
</dbReference>
<dbReference type="InterPro" id="IPR049913">
    <property type="entry name" value="HCV_p7"/>
</dbReference>
<dbReference type="InterPro" id="IPR014001">
    <property type="entry name" value="Helicase_ATP-bd"/>
</dbReference>
<dbReference type="InterPro" id="IPR001650">
    <property type="entry name" value="Helicase_C-like"/>
</dbReference>
<dbReference type="InterPro" id="IPR004109">
    <property type="entry name" value="HepC_NS3_protease"/>
</dbReference>
<dbReference type="InterPro" id="IPR054175">
    <property type="entry name" value="NS3_helicase_C"/>
</dbReference>
<dbReference type="InterPro" id="IPR038170">
    <property type="entry name" value="NS5A_1a_sf"/>
</dbReference>
<dbReference type="InterPro" id="IPR027417">
    <property type="entry name" value="P-loop_NTPase"/>
</dbReference>
<dbReference type="InterPro" id="IPR009003">
    <property type="entry name" value="Peptidase_S1_PA"/>
</dbReference>
<dbReference type="InterPro" id="IPR043504">
    <property type="entry name" value="Peptidase_S1_PA_chymotrypsin"/>
</dbReference>
<dbReference type="InterPro" id="IPR043128">
    <property type="entry name" value="Rev_trsase/Diguanyl_cyclase"/>
</dbReference>
<dbReference type="InterPro" id="IPR007094">
    <property type="entry name" value="RNA-dir_pol_PSvirus"/>
</dbReference>
<dbReference type="InterPro" id="IPR002166">
    <property type="entry name" value="RNA_pol_HCV"/>
</dbReference>
<dbReference type="Pfam" id="PF07652">
    <property type="entry name" value="Flavi_DEAD"/>
    <property type="match status" value="1"/>
</dbReference>
<dbReference type="Pfam" id="PF01543">
    <property type="entry name" value="HCV_capsid"/>
    <property type="match status" value="1"/>
</dbReference>
<dbReference type="Pfam" id="PF01542">
    <property type="entry name" value="HCV_core"/>
    <property type="match status" value="1"/>
</dbReference>
<dbReference type="Pfam" id="PF01539">
    <property type="entry name" value="HCV_env"/>
    <property type="match status" value="1"/>
</dbReference>
<dbReference type="Pfam" id="PF01560">
    <property type="entry name" value="HCV_NS1"/>
    <property type="match status" value="1"/>
</dbReference>
<dbReference type="Pfam" id="PF01538">
    <property type="entry name" value="HCV_NS2"/>
    <property type="match status" value="1"/>
</dbReference>
<dbReference type="Pfam" id="PF01006">
    <property type="entry name" value="HCV_NS4a"/>
    <property type="match status" value="1"/>
</dbReference>
<dbReference type="Pfam" id="PF01001">
    <property type="entry name" value="HCV_NS4b"/>
    <property type="match status" value="1"/>
</dbReference>
<dbReference type="Pfam" id="PF01506">
    <property type="entry name" value="HCV_NS5a"/>
    <property type="match status" value="1"/>
</dbReference>
<dbReference type="Pfam" id="PF08300">
    <property type="entry name" value="HCV_NS5a_1a"/>
    <property type="match status" value="1"/>
</dbReference>
<dbReference type="Pfam" id="PF08301">
    <property type="entry name" value="HCV_NS5a_1b"/>
    <property type="match status" value="1"/>
</dbReference>
<dbReference type="Pfam" id="PF12941">
    <property type="entry name" value="HCV_NS5a_C"/>
    <property type="match status" value="1"/>
</dbReference>
<dbReference type="Pfam" id="PF22027">
    <property type="entry name" value="NS3_helicase_C"/>
    <property type="match status" value="1"/>
</dbReference>
<dbReference type="Pfam" id="PF02907">
    <property type="entry name" value="Peptidase_S29"/>
    <property type="match status" value="1"/>
</dbReference>
<dbReference type="Pfam" id="PF00998">
    <property type="entry name" value="RdRP_3"/>
    <property type="match status" value="1"/>
</dbReference>
<dbReference type="SMART" id="SM00487">
    <property type="entry name" value="DEXDc"/>
    <property type="match status" value="1"/>
</dbReference>
<dbReference type="SUPFAM" id="SSF56672">
    <property type="entry name" value="DNA/RNA polymerases"/>
    <property type="match status" value="1"/>
</dbReference>
<dbReference type="SUPFAM" id="SSF52540">
    <property type="entry name" value="P-loop containing nucleoside triphosphate hydrolases"/>
    <property type="match status" value="2"/>
</dbReference>
<dbReference type="SUPFAM" id="SSF50494">
    <property type="entry name" value="Trypsin-like serine proteases"/>
    <property type="match status" value="1"/>
</dbReference>
<dbReference type="PROSITE" id="PS51693">
    <property type="entry name" value="HCV_NS2_PRO"/>
    <property type="match status" value="1"/>
</dbReference>
<dbReference type="PROSITE" id="PS51192">
    <property type="entry name" value="HELICASE_ATP_BIND_1"/>
    <property type="match status" value="1"/>
</dbReference>
<dbReference type="PROSITE" id="PS51194">
    <property type="entry name" value="HELICASE_CTER"/>
    <property type="match status" value="1"/>
</dbReference>
<dbReference type="PROSITE" id="PS51822">
    <property type="entry name" value="HV_PV_NS3_PRO"/>
    <property type="match status" value="1"/>
</dbReference>
<dbReference type="PROSITE" id="PS50507">
    <property type="entry name" value="RDRP_SSRNA_POS"/>
    <property type="match status" value="1"/>
</dbReference>
<organismHost>
    <name type="scientific">Homo sapiens</name>
    <name type="common">Human</name>
    <dbReference type="NCBI Taxonomy" id="9606"/>
</organismHost>
<evidence type="ECO:0000250" key="1">
    <source>
        <dbReference type="UniProtKB" id="O92972"/>
    </source>
</evidence>
<evidence type="ECO:0000250" key="2">
    <source>
        <dbReference type="UniProtKB" id="P26662"/>
    </source>
</evidence>
<evidence type="ECO:0000250" key="3">
    <source>
        <dbReference type="UniProtKB" id="P26663"/>
    </source>
</evidence>
<evidence type="ECO:0000250" key="4">
    <source>
        <dbReference type="UniProtKB" id="P26664"/>
    </source>
</evidence>
<evidence type="ECO:0000250" key="5">
    <source>
        <dbReference type="UniProtKB" id="P27958"/>
    </source>
</evidence>
<evidence type="ECO:0000250" key="6">
    <source>
        <dbReference type="UniProtKB" id="P29846"/>
    </source>
</evidence>
<evidence type="ECO:0000250" key="7">
    <source>
        <dbReference type="UniProtKB" id="Q01403"/>
    </source>
</evidence>
<evidence type="ECO:0000250" key="8">
    <source>
        <dbReference type="UniProtKB" id="Q03463"/>
    </source>
</evidence>
<evidence type="ECO:0000250" key="9">
    <source>
        <dbReference type="UniProtKB" id="Q5EG65"/>
    </source>
</evidence>
<evidence type="ECO:0000250" key="10">
    <source>
        <dbReference type="UniProtKB" id="Q913V3"/>
    </source>
</evidence>
<evidence type="ECO:0000250" key="11">
    <source>
        <dbReference type="UniProtKB" id="Q99IB8"/>
    </source>
</evidence>
<evidence type="ECO:0000250" key="12">
    <source>
        <dbReference type="UniProtKB" id="Q9WMX2"/>
    </source>
</evidence>
<evidence type="ECO:0000255" key="13"/>
<evidence type="ECO:0000255" key="14">
    <source>
        <dbReference type="PROSITE-ProRule" id="PRU00539"/>
    </source>
</evidence>
<evidence type="ECO:0000255" key="15">
    <source>
        <dbReference type="PROSITE-ProRule" id="PRU00541"/>
    </source>
</evidence>
<evidence type="ECO:0000255" key="16">
    <source>
        <dbReference type="PROSITE-ProRule" id="PRU00542"/>
    </source>
</evidence>
<evidence type="ECO:0000255" key="17">
    <source>
        <dbReference type="PROSITE-ProRule" id="PRU01030"/>
    </source>
</evidence>
<evidence type="ECO:0000255" key="18">
    <source>
        <dbReference type="PROSITE-ProRule" id="PRU01166"/>
    </source>
</evidence>
<evidence type="ECO:0000256" key="19">
    <source>
        <dbReference type="SAM" id="MobiDB-lite"/>
    </source>
</evidence>
<evidence type="ECO:0000305" key="20"/>